<name>NOTCH_DROME</name>
<gene>
    <name evidence="35" type="primary">N</name>
    <name evidence="35" type="ORF">CG3936</name>
</gene>
<keyword id="KW-0002">3D-structure</keyword>
<keyword id="KW-0010">Activator</keyword>
<keyword id="KW-0040">ANK repeat</keyword>
<keyword id="KW-1003">Cell membrane</keyword>
<keyword id="KW-0217">Developmental protein</keyword>
<keyword id="KW-0221">Differentiation</keyword>
<keyword id="KW-1015">Disulfide bond</keyword>
<keyword id="KW-0245">EGF-like domain</keyword>
<keyword id="KW-0967">Endosome</keyword>
<keyword id="KW-0325">Glycoprotein</keyword>
<keyword id="KW-0472">Membrane</keyword>
<keyword id="KW-0524">Neurogenesis</keyword>
<keyword id="KW-0914">Notch signaling pathway</keyword>
<keyword id="KW-0539">Nucleus</keyword>
<keyword id="KW-0896">Oogenesis</keyword>
<keyword id="KW-0597">Phosphoprotein</keyword>
<keyword id="KW-0675">Receptor</keyword>
<keyword id="KW-1185">Reference proteome</keyword>
<keyword id="KW-0677">Repeat</keyword>
<keyword id="KW-0732">Signal</keyword>
<keyword id="KW-0804">Transcription</keyword>
<keyword id="KW-0805">Transcription regulation</keyword>
<keyword id="KW-0812">Transmembrane</keyword>
<keyword id="KW-1133">Transmembrane helix</keyword>
<keyword id="KW-0832">Ubl conjugation</keyword>
<accession>P07207</accession>
<accession>O97458</accession>
<accession>P04154</accession>
<accession>Q9W4T8</accession>
<feature type="signal peptide" evidence="1">
    <location>
        <begin position="1"/>
        <end position="52"/>
    </location>
</feature>
<feature type="chain" id="PRO_0000007673" description="Neurogenic locus Notch protein">
    <location>
        <begin position="53"/>
        <end position="2703"/>
    </location>
</feature>
<feature type="chain" id="PRO_0000296234" description="Processed neurogenic locus Notch protein">
    <location>
        <begin status="unknown"/>
        <end position="2703"/>
    </location>
</feature>
<feature type="topological domain" description="Extracellular" evidence="1">
    <location>
        <begin position="53"/>
        <end position="1745"/>
    </location>
</feature>
<feature type="transmembrane region" description="Helical" evidence="1">
    <location>
        <begin position="1746"/>
        <end position="1766"/>
    </location>
</feature>
<feature type="topological domain" description="Cytoplasmic" evidence="1">
    <location>
        <begin position="1767"/>
        <end position="2703"/>
    </location>
</feature>
<feature type="domain" description="EGF-like 1" evidence="2">
    <location>
        <begin position="58"/>
        <end position="95"/>
    </location>
</feature>
<feature type="domain" description="EGF-like 2" evidence="2">
    <location>
        <begin position="96"/>
        <end position="136"/>
    </location>
</feature>
<feature type="domain" description="EGF-like 3" evidence="2">
    <location>
        <begin position="139"/>
        <end position="176"/>
    </location>
</feature>
<feature type="domain" description="EGF-like 4" evidence="2">
    <location>
        <begin position="177"/>
        <end position="215"/>
    </location>
</feature>
<feature type="domain" description="EGF-like 5; calcium-binding" evidence="2">
    <location>
        <begin position="217"/>
        <end position="253"/>
    </location>
</feature>
<feature type="domain" description="EGF-like 6" evidence="2">
    <location>
        <begin position="255"/>
        <end position="291"/>
    </location>
</feature>
<feature type="domain" description="EGF-like 7; calcium-binding" evidence="2">
    <location>
        <begin position="293"/>
        <end position="329"/>
    </location>
</feature>
<feature type="domain" description="EGF-like 8; calcium-binding" evidence="2">
    <location>
        <begin position="331"/>
        <end position="370"/>
    </location>
</feature>
<feature type="domain" description="EGF-like 9; calcium-binding" evidence="2">
    <location>
        <begin position="372"/>
        <end position="408"/>
    </location>
</feature>
<feature type="domain" description="EGF-like 10" evidence="2">
    <location>
        <begin position="409"/>
        <end position="447"/>
    </location>
</feature>
<feature type="domain" description="EGF-like 11; calcium-binding" evidence="2">
    <location>
        <begin position="449"/>
        <end position="486"/>
    </location>
</feature>
<feature type="domain" description="EGF-like 12; calcium-binding" evidence="2">
    <location>
        <begin position="488"/>
        <end position="524"/>
    </location>
</feature>
<feature type="domain" description="EGF-like 13; calcium-binding" evidence="2">
    <location>
        <begin position="526"/>
        <end position="562"/>
    </location>
</feature>
<feature type="domain" description="EGF-like 14; calcium-binding" evidence="2">
    <location>
        <begin position="564"/>
        <end position="600"/>
    </location>
</feature>
<feature type="domain" description="EGF-like 15; calcium-binding" evidence="2">
    <location>
        <begin position="602"/>
        <end position="637"/>
    </location>
</feature>
<feature type="domain" description="EGF-like 16; calcium-binding" evidence="2">
    <location>
        <begin position="639"/>
        <end position="675"/>
    </location>
</feature>
<feature type="domain" description="EGF-like 17; calcium-binding" evidence="2">
    <location>
        <begin position="677"/>
        <end position="713"/>
    </location>
</feature>
<feature type="domain" description="EGF-like 18; calcium-binding" evidence="2">
    <location>
        <begin position="715"/>
        <end position="751"/>
    </location>
</feature>
<feature type="domain" description="EGF-like 19; calcium-binding" evidence="2">
    <location>
        <begin position="753"/>
        <end position="789"/>
    </location>
</feature>
<feature type="domain" description="EGF-like 20; calcium-binding" evidence="2">
    <location>
        <begin position="791"/>
        <end position="827"/>
    </location>
</feature>
<feature type="domain" description="EGF-like 21; calcium-binding" evidence="2">
    <location>
        <begin position="829"/>
        <end position="865"/>
    </location>
</feature>
<feature type="domain" description="EGF-like 22" evidence="2">
    <location>
        <begin position="867"/>
        <end position="905"/>
    </location>
</feature>
<feature type="domain" description="EGF-like 23; calcium-binding" evidence="2">
    <location>
        <begin position="907"/>
        <end position="944"/>
    </location>
</feature>
<feature type="domain" description="EGF-like 24; calcium-binding" evidence="2">
    <location>
        <begin position="946"/>
        <end position="982"/>
    </location>
</feature>
<feature type="domain" description="EGF-like 25" evidence="2">
    <location>
        <begin position="984"/>
        <end position="1020"/>
    </location>
</feature>
<feature type="domain" description="EGF-like 26; calcium-binding" evidence="2">
    <location>
        <begin position="1022"/>
        <end position="1058"/>
    </location>
</feature>
<feature type="domain" description="EGF-like 27" evidence="2">
    <location>
        <begin position="1060"/>
        <end position="1096"/>
    </location>
</feature>
<feature type="domain" description="EGF-like 28" evidence="2">
    <location>
        <begin position="1098"/>
        <end position="1134"/>
    </location>
</feature>
<feature type="domain" description="EGF-like 29" evidence="2">
    <location>
        <begin position="1136"/>
        <end position="1181"/>
    </location>
</feature>
<feature type="domain" description="EGF-like 30; calcium-binding" evidence="2">
    <location>
        <begin position="1183"/>
        <end position="1219"/>
    </location>
</feature>
<feature type="domain" description="EGF-like 31; calcium-binding" evidence="2">
    <location>
        <begin position="1221"/>
        <end position="1257"/>
    </location>
</feature>
<feature type="domain" description="EGF-like 32; calcium-binding" evidence="2">
    <location>
        <begin position="1259"/>
        <end position="1295"/>
    </location>
</feature>
<feature type="domain" description="EGF-like 33" evidence="2">
    <location>
        <begin position="1297"/>
        <end position="1335"/>
    </location>
</feature>
<feature type="domain" description="EGF-like 34" evidence="2">
    <location>
        <begin position="1337"/>
        <end position="1373"/>
    </location>
</feature>
<feature type="domain" description="EGF-like 35" evidence="2">
    <location>
        <begin position="1375"/>
        <end position="1412"/>
    </location>
</feature>
<feature type="domain" description="EGF-like 36" evidence="2">
    <location>
        <begin position="1415"/>
        <end position="1451"/>
    </location>
</feature>
<feature type="repeat" description="LNR 1" evidence="3">
    <location>
        <begin position="1482"/>
        <end position="1521"/>
    </location>
</feature>
<feature type="repeat" description="LNR 2" evidence="3">
    <location>
        <begin position="1522"/>
        <end position="1557"/>
    </location>
</feature>
<feature type="repeat" description="LNR 3" evidence="3">
    <location>
        <begin position="1559"/>
        <end position="1599"/>
    </location>
</feature>
<feature type="repeat" description="ANK 1" evidence="1">
    <location>
        <begin position="1901"/>
        <end position="1945"/>
    </location>
</feature>
<feature type="repeat" description="ANK 2" evidence="1">
    <location>
        <begin position="1950"/>
        <end position="1979"/>
    </location>
</feature>
<feature type="repeat" description="ANK 3" evidence="1">
    <location>
        <begin position="1983"/>
        <end position="2013"/>
    </location>
</feature>
<feature type="repeat" description="ANK 4" evidence="1">
    <location>
        <begin position="2017"/>
        <end position="2046"/>
    </location>
</feature>
<feature type="repeat" description="ANK 5" evidence="1">
    <location>
        <begin position="2050"/>
        <end position="2079"/>
    </location>
</feature>
<feature type="repeat" description="ANK 6" evidence="1">
    <location>
        <begin position="2083"/>
        <end position="2112"/>
    </location>
</feature>
<feature type="repeat" description="ANK 7" evidence="1">
    <location>
        <begin position="2116"/>
        <end position="2139"/>
    </location>
</feature>
<feature type="region of interest" description="Disordered" evidence="4">
    <location>
        <begin position="1810"/>
        <end position="1850"/>
    </location>
</feature>
<feature type="region of interest" description="Disordered" evidence="4">
    <location>
        <begin position="2172"/>
        <end position="2257"/>
    </location>
</feature>
<feature type="region of interest" description="Interaction with Nedd4">
    <location>
        <begin position="2325"/>
        <end position="2328"/>
    </location>
</feature>
<feature type="region of interest" description="Disordered" evidence="4">
    <location>
        <begin position="2399"/>
        <end position="2452"/>
    </location>
</feature>
<feature type="region of interest" description="Disordered" evidence="4">
    <location>
        <begin position="2488"/>
        <end position="2524"/>
    </location>
</feature>
<feature type="region of interest" description="Disordered" evidence="4">
    <location>
        <begin position="2579"/>
        <end position="2620"/>
    </location>
</feature>
<feature type="region of interest" description="Disordered" evidence="4">
    <location>
        <begin position="2632"/>
        <end position="2703"/>
    </location>
</feature>
<feature type="compositionally biased region" description="Low complexity" evidence="4">
    <location>
        <begin position="2228"/>
        <end position="2238"/>
    </location>
</feature>
<feature type="compositionally biased region" description="Polar residues" evidence="4">
    <location>
        <begin position="2414"/>
        <end position="2429"/>
    </location>
</feature>
<feature type="compositionally biased region" description="Gly residues" evidence="4">
    <location>
        <begin position="2488"/>
        <end position="2497"/>
    </location>
</feature>
<feature type="compositionally biased region" description="Low complexity" evidence="4">
    <location>
        <begin position="2598"/>
        <end position="2619"/>
    </location>
</feature>
<feature type="compositionally biased region" description="Polar residues" evidence="4">
    <location>
        <begin position="2632"/>
        <end position="2653"/>
    </location>
</feature>
<feature type="compositionally biased region" description="Low complexity" evidence="4">
    <location>
        <begin position="2659"/>
        <end position="2675"/>
    </location>
</feature>
<feature type="compositionally biased region" description="Polar residues" evidence="4">
    <location>
        <begin position="2677"/>
        <end position="2687"/>
    </location>
</feature>
<feature type="modified residue" description="Phosphoserine" evidence="17">
    <location>
        <position position="2447"/>
    </location>
</feature>
<feature type="glycosylation site" description="O-linked (Fuc...) threonine" evidence="27">
    <location>
        <position position="72"/>
    </location>
</feature>
<feature type="glycosylation site" description="O-linked (Fuc...) threonine" evidence="27">
    <location>
        <position position="110"/>
    </location>
</feature>
<feature type="glycosylation site" description="O-linked (Fuc...) threonine" evidence="27">
    <location>
        <position position="153"/>
    </location>
</feature>
<feature type="glycosylation site" description="O-linked (Glc...) serine" evidence="27">
    <location>
        <position position="183"/>
    </location>
</feature>
<feature type="glycosylation site" description="O-linked (Fuc...) threonine" evidence="27">
    <location>
        <position position="191"/>
    </location>
</feature>
<feature type="glycosylation site" description="O-linked (GlcNAc...) threonine" evidence="27">
    <location>
        <position position="210"/>
    </location>
</feature>
<feature type="glycosylation site" description="O-linked (Glc...) serine" evidence="27">
    <location>
        <position position="223"/>
    </location>
</feature>
<feature type="glycosylation site" description="O-linked (Fuc...) threonine" evidence="27">
    <location>
        <position position="231"/>
    </location>
</feature>
<feature type="glycosylation site" description="O-linked (Fuc...) threonine" evidence="27">
    <location>
        <position position="307"/>
    </location>
</feature>
<feature type="glycosylation site" description="N-linked (GlcNAc...) asparagine" evidence="1">
    <location>
        <position position="322"/>
    </location>
</feature>
<feature type="glycosylation site" description="O-linked (Fuc...) threonine" evidence="27">
    <location>
        <position position="348"/>
    </location>
</feature>
<feature type="glycosylation site" description="N-linked (GlcNAc...) asparagine" evidence="1">
    <location>
        <position position="371"/>
    </location>
</feature>
<feature type="glycosylation site" description="O-linked (Fuc...) threonine" evidence="27">
    <location>
        <position position="386"/>
    </location>
</feature>
<feature type="glycosylation site" description="O-linked (Glc...) serine" evidence="27">
    <location>
        <position position="427"/>
    </location>
</feature>
<feature type="glycosylation site" description="N-linked (GlcNAc...) asparagine" evidence="1">
    <location>
        <position position="430"/>
    </location>
</feature>
<feature type="glycosylation site" description="N-linked (GlcNAc...) asparagine" evidence="1">
    <location>
        <position position="475"/>
    </location>
</feature>
<feature type="glycosylation site" description="O-linked (GlcNAc...) threonine" evidence="27">
    <location>
        <position position="481"/>
    </location>
</feature>
<feature type="glycosylation site" description="O-linked (Glc...) serine" evidence="27">
    <location>
        <position position="494"/>
    </location>
</feature>
<feature type="glycosylation site" description="O-linked (Fuc...) serine" evidence="27">
    <location>
        <position position="502"/>
    </location>
</feature>
<feature type="glycosylation site" description="O-linked (GlcNAc...) threonine" evidence="27">
    <location>
        <position position="519"/>
    </location>
</feature>
<feature type="glycosylation site" description="O-linked (Glc...) serine" evidence="27">
    <location>
        <position position="532"/>
    </location>
</feature>
<feature type="glycosylation site" description="O-linked (Glc...) serine" evidence="27">
    <location>
        <position position="570"/>
    </location>
</feature>
<feature type="glycosylation site" description="O-linked (GlcNAc...) threonine" evidence="27">
    <location>
        <position position="595"/>
    </location>
</feature>
<feature type="glycosylation site" description="O-linked (Glc...) serine" evidence="27">
    <location>
        <position position="608"/>
    </location>
</feature>
<feature type="glycosylation site" description="O-linked (Glc...) serine" evidence="27">
    <location>
        <position position="645"/>
    </location>
</feature>
<feature type="glycosylation site" description="O-linked (Glc...) serine" evidence="27">
    <location>
        <position position="683"/>
    </location>
</feature>
<feature type="glycosylation site" description="O-linked (Fuc...) threonine" evidence="27">
    <location>
        <position position="691"/>
    </location>
</feature>
<feature type="glycosylation site" description="O-linked (Glc...) serine" evidence="27">
    <location>
        <position position="721"/>
    </location>
</feature>
<feature type="glycosylation site" description="O-linked (Glc...) serine" evidence="27">
    <location>
        <position position="759"/>
    </location>
</feature>
<feature type="glycosylation site" description="O-linked (Glc...) serine" evidence="27">
    <location>
        <position position="797"/>
    </location>
</feature>
<feature type="glycosylation site" description="O-linked (Fuc...) threonine" evidence="27">
    <location>
        <position position="805"/>
    </location>
</feature>
<feature type="glycosylation site" description="O-linked (GlcNAc...) threonine" evidence="27">
    <location>
        <position position="822"/>
    </location>
</feature>
<feature type="glycosylation site" description="O-linked (Fuc...) threonine" evidence="27">
    <location>
        <position position="843"/>
    </location>
</feature>
<feature type="glycosylation site" description="O-linked (Fuc...) serine" evidence="27">
    <location>
        <position position="922"/>
    </location>
</feature>
<feature type="glycosylation site" description="O-linked (Glc...) serine" evidence="27">
    <location>
        <position position="952"/>
    </location>
</feature>
<feature type="glycosylation site" description="O-linked (Fuc...) threonine" evidence="27">
    <location>
        <position position="960"/>
    </location>
</feature>
<feature type="glycosylation site" description="O-linked (Glc...) serine" evidence="27">
    <location>
        <position position="990"/>
    </location>
</feature>
<feature type="glycosylation site" description="O-linked (Fuc...) threonine" evidence="27">
    <location>
        <position position="998"/>
    </location>
</feature>
<feature type="glycosylation site" description="O-linked (Fuc...) serine" evidence="27">
    <location>
        <position position="1036"/>
    </location>
</feature>
<feature type="glycosylation site" description="N-linked (GlcNAc...) asparagine" evidence="1">
    <location>
        <position position="1045"/>
    </location>
</feature>
<feature type="glycosylation site" description="O-linked (Glc...) serine" evidence="27">
    <location>
        <position position="1066"/>
    </location>
</feature>
<feature type="glycosylation site" description="O-linked (Fuc...) threonine" evidence="27">
    <location>
        <position position="1074"/>
    </location>
</feature>
<feature type="glycosylation site" description="O-linked (Fuc...) threonine" evidence="27">
    <location>
        <position position="1112"/>
    </location>
</feature>
<feature type="glycosylation site" description="N-linked (GlcNAc...) asparagine" evidence="1">
    <location>
        <position position="1157"/>
    </location>
</feature>
<feature type="glycosylation site" description="O-linked (Glc...) serine" evidence="27">
    <location>
        <position position="1189"/>
    </location>
</feature>
<feature type="glycosylation site" description="O-linked (Fuc...) threonine" evidence="27">
    <location>
        <position position="1197"/>
    </location>
</feature>
<feature type="glycosylation site" description="O-linked (Fuc...) threonine" evidence="27">
    <location>
        <position position="1235"/>
    </location>
</feature>
<feature type="glycosylation site" description="N-linked (GlcNAc...) asparagine" evidence="1">
    <location>
        <position position="1242"/>
    </location>
</feature>
<feature type="glycosylation site" description="N-linked (GlcNAc...) asparagine" evidence="1">
    <location>
        <position position="1271"/>
    </location>
</feature>
<feature type="glycosylation site" description="O-linked (Fuc...) serine" evidence="27">
    <location>
        <position position="1273"/>
    </location>
</feature>
<feature type="glycosylation site" description="O-linked (Glc...) serine" evidence="27">
    <location>
        <position position="1303"/>
    </location>
</feature>
<feature type="glycosylation site" description="O-linked (Glc...) serine" evidence="27">
    <location>
        <position position="1381"/>
    </location>
</feature>
<feature type="glycosylation site" description="N-linked (GlcNAc...) asparagine" evidence="1">
    <location>
        <position position="1521"/>
    </location>
</feature>
<feature type="glycosylation site" description="N-linked (GlcNAc...) asparagine" evidence="1">
    <location>
        <position position="1594"/>
    </location>
</feature>
<feature type="glycosylation site" description="N-linked (GlcNAc...) asparagine" evidence="1">
    <location>
        <position position="1627"/>
    </location>
</feature>
<feature type="disulfide bond" evidence="2">
    <location>
        <begin position="62"/>
        <end position="73"/>
    </location>
</feature>
<feature type="disulfide bond" evidence="2">
    <location>
        <begin position="67"/>
        <end position="83"/>
    </location>
</feature>
<feature type="disulfide bond" evidence="2">
    <location>
        <begin position="85"/>
        <end position="94"/>
    </location>
</feature>
<feature type="disulfide bond" evidence="2">
    <location>
        <begin position="100"/>
        <end position="111"/>
    </location>
</feature>
<feature type="disulfide bond" evidence="2">
    <location>
        <begin position="105"/>
        <end position="124"/>
    </location>
</feature>
<feature type="disulfide bond" evidence="2">
    <location>
        <begin position="126"/>
        <end position="135"/>
    </location>
</feature>
<feature type="disulfide bond" evidence="2">
    <location>
        <begin position="143"/>
        <end position="154"/>
    </location>
</feature>
<feature type="disulfide bond" evidence="2">
    <location>
        <begin position="148"/>
        <end position="164"/>
    </location>
</feature>
<feature type="disulfide bond" evidence="2">
    <location>
        <begin position="166"/>
        <end position="175"/>
    </location>
</feature>
<feature type="disulfide bond" evidence="2">
    <location>
        <begin position="181"/>
        <end position="192"/>
    </location>
</feature>
<feature type="disulfide bond" evidence="2">
    <location>
        <begin position="186"/>
        <end position="203"/>
    </location>
</feature>
<feature type="disulfide bond" evidence="2">
    <location>
        <begin position="205"/>
        <end position="214"/>
    </location>
</feature>
<feature type="disulfide bond" evidence="2">
    <location>
        <begin position="221"/>
        <end position="232"/>
    </location>
</feature>
<feature type="disulfide bond" evidence="2">
    <location>
        <begin position="226"/>
        <end position="241"/>
    </location>
</feature>
<feature type="disulfide bond" evidence="2">
    <location>
        <begin position="243"/>
        <end position="252"/>
    </location>
</feature>
<feature type="disulfide bond" evidence="2">
    <location>
        <begin position="259"/>
        <end position="270"/>
    </location>
</feature>
<feature type="disulfide bond" evidence="2">
    <location>
        <begin position="264"/>
        <end position="279"/>
    </location>
</feature>
<feature type="disulfide bond" evidence="2">
    <location>
        <begin position="281"/>
        <end position="290"/>
    </location>
</feature>
<feature type="disulfide bond" evidence="2">
    <location>
        <begin position="297"/>
        <end position="308"/>
    </location>
</feature>
<feature type="disulfide bond" evidence="2">
    <location>
        <begin position="302"/>
        <end position="317"/>
    </location>
</feature>
<feature type="disulfide bond" evidence="2">
    <location>
        <begin position="319"/>
        <end position="328"/>
    </location>
</feature>
<feature type="disulfide bond" evidence="2">
    <location>
        <begin position="335"/>
        <end position="349"/>
    </location>
</feature>
<feature type="disulfide bond" evidence="2">
    <location>
        <begin position="343"/>
        <end position="358"/>
    </location>
</feature>
<feature type="disulfide bond" evidence="2">
    <location>
        <begin position="360"/>
        <end position="369"/>
    </location>
</feature>
<feature type="disulfide bond" evidence="2">
    <location>
        <begin position="376"/>
        <end position="387"/>
    </location>
</feature>
<feature type="disulfide bond" evidence="2">
    <location>
        <begin position="381"/>
        <end position="396"/>
    </location>
</feature>
<feature type="disulfide bond" evidence="2">
    <location>
        <begin position="398"/>
        <end position="407"/>
    </location>
</feature>
<feature type="disulfide bond" evidence="2">
    <location>
        <begin position="413"/>
        <end position="424"/>
    </location>
</feature>
<feature type="disulfide bond" evidence="2">
    <location>
        <begin position="418"/>
        <end position="435"/>
    </location>
</feature>
<feature type="disulfide bond" evidence="2">
    <location>
        <begin position="437"/>
        <end position="446"/>
    </location>
</feature>
<feature type="disulfide bond" evidence="2">
    <location>
        <begin position="453"/>
        <end position="465"/>
    </location>
</feature>
<feature type="disulfide bond" evidence="2">
    <location>
        <begin position="459"/>
        <end position="474"/>
    </location>
</feature>
<feature type="disulfide bond" evidence="2">
    <location>
        <begin position="476"/>
        <end position="485"/>
    </location>
</feature>
<feature type="disulfide bond" evidence="2">
    <location>
        <begin position="492"/>
        <end position="503"/>
    </location>
</feature>
<feature type="disulfide bond" evidence="2">
    <location>
        <begin position="497"/>
        <end position="512"/>
    </location>
</feature>
<feature type="disulfide bond" evidence="2">
    <location>
        <begin position="514"/>
        <end position="523"/>
    </location>
</feature>
<feature type="disulfide bond" evidence="2">
    <location>
        <begin position="530"/>
        <end position="541"/>
    </location>
</feature>
<feature type="disulfide bond" evidence="2">
    <location>
        <begin position="535"/>
        <end position="550"/>
    </location>
</feature>
<feature type="disulfide bond" evidence="2">
    <location>
        <begin position="552"/>
        <end position="561"/>
    </location>
</feature>
<feature type="disulfide bond" evidence="2">
    <location>
        <begin position="568"/>
        <end position="579"/>
    </location>
</feature>
<feature type="disulfide bond" evidence="2">
    <location>
        <begin position="573"/>
        <end position="588"/>
    </location>
</feature>
<feature type="disulfide bond" evidence="2">
    <location>
        <begin position="590"/>
        <end position="599"/>
    </location>
</feature>
<feature type="disulfide bond" evidence="2">
    <location>
        <begin position="606"/>
        <end position="616"/>
    </location>
</feature>
<feature type="disulfide bond" evidence="2">
    <location>
        <begin position="611"/>
        <end position="625"/>
    </location>
</feature>
<feature type="disulfide bond" evidence="2">
    <location>
        <begin position="627"/>
        <end position="636"/>
    </location>
</feature>
<feature type="disulfide bond" evidence="2">
    <location>
        <begin position="643"/>
        <end position="654"/>
    </location>
</feature>
<feature type="disulfide bond" evidence="2">
    <location>
        <begin position="648"/>
        <end position="663"/>
    </location>
</feature>
<feature type="disulfide bond" evidence="2">
    <location>
        <begin position="665"/>
        <end position="674"/>
    </location>
</feature>
<feature type="disulfide bond" evidence="2">
    <location>
        <begin position="681"/>
        <end position="692"/>
    </location>
</feature>
<feature type="disulfide bond" evidence="2">
    <location>
        <begin position="686"/>
        <end position="701"/>
    </location>
</feature>
<feature type="disulfide bond" evidence="2">
    <location>
        <begin position="703"/>
        <end position="712"/>
    </location>
</feature>
<feature type="disulfide bond" evidence="2">
    <location>
        <begin position="719"/>
        <end position="730"/>
    </location>
</feature>
<feature type="disulfide bond" evidence="2">
    <location>
        <begin position="724"/>
        <end position="739"/>
    </location>
</feature>
<feature type="disulfide bond" evidence="2">
    <location>
        <begin position="741"/>
        <end position="750"/>
    </location>
</feature>
<feature type="disulfide bond" evidence="2">
    <location>
        <begin position="757"/>
        <end position="768"/>
    </location>
</feature>
<feature type="disulfide bond" evidence="2">
    <location>
        <begin position="762"/>
        <end position="777"/>
    </location>
</feature>
<feature type="disulfide bond" evidence="2">
    <location>
        <begin position="779"/>
        <end position="788"/>
    </location>
</feature>
<feature type="disulfide bond" evidence="2">
    <location>
        <begin position="795"/>
        <end position="806"/>
    </location>
</feature>
<feature type="disulfide bond" evidence="2">
    <location>
        <begin position="800"/>
        <end position="815"/>
    </location>
</feature>
<feature type="disulfide bond" evidence="2">
    <location>
        <begin position="817"/>
        <end position="826"/>
    </location>
</feature>
<feature type="disulfide bond" evidence="2">
    <location>
        <begin position="833"/>
        <end position="844"/>
    </location>
</feature>
<feature type="disulfide bond" evidence="2">
    <location>
        <begin position="838"/>
        <end position="853"/>
    </location>
</feature>
<feature type="disulfide bond" evidence="2">
    <location>
        <begin position="855"/>
        <end position="864"/>
    </location>
</feature>
<feature type="disulfide bond" evidence="2">
    <location>
        <begin position="871"/>
        <end position="882"/>
    </location>
</feature>
<feature type="disulfide bond" evidence="2">
    <location>
        <begin position="876"/>
        <end position="893"/>
    </location>
</feature>
<feature type="disulfide bond" evidence="2">
    <location>
        <begin position="895"/>
        <end position="904"/>
    </location>
</feature>
<feature type="disulfide bond" evidence="2">
    <location>
        <begin position="911"/>
        <end position="923"/>
    </location>
</feature>
<feature type="disulfide bond" evidence="2">
    <location>
        <begin position="917"/>
        <end position="932"/>
    </location>
</feature>
<feature type="disulfide bond" evidence="2">
    <location>
        <begin position="934"/>
        <end position="943"/>
    </location>
</feature>
<feature type="disulfide bond" evidence="2">
    <location>
        <begin position="950"/>
        <end position="961"/>
    </location>
</feature>
<feature type="disulfide bond" evidence="2">
    <location>
        <begin position="955"/>
        <end position="970"/>
    </location>
</feature>
<feature type="disulfide bond" evidence="2">
    <location>
        <begin position="972"/>
        <end position="981"/>
    </location>
</feature>
<feature type="disulfide bond" evidence="2">
    <location>
        <begin position="988"/>
        <end position="999"/>
    </location>
</feature>
<feature type="disulfide bond" evidence="2">
    <location>
        <begin position="993"/>
        <end position="1008"/>
    </location>
</feature>
<feature type="disulfide bond" evidence="2">
    <location>
        <begin position="1010"/>
        <end position="1019"/>
    </location>
</feature>
<feature type="disulfide bond" evidence="2">
    <location>
        <begin position="1026"/>
        <end position="1037"/>
    </location>
</feature>
<feature type="disulfide bond" evidence="2">
    <location>
        <begin position="1031"/>
        <end position="1046"/>
    </location>
</feature>
<feature type="disulfide bond" evidence="2">
    <location>
        <begin position="1048"/>
        <end position="1057"/>
    </location>
</feature>
<feature type="disulfide bond" evidence="2">
    <location>
        <begin position="1064"/>
        <end position="1075"/>
    </location>
</feature>
<feature type="disulfide bond" evidence="2">
    <location>
        <begin position="1069"/>
        <end position="1084"/>
    </location>
</feature>
<feature type="disulfide bond" evidence="2">
    <location>
        <begin position="1086"/>
        <end position="1095"/>
    </location>
</feature>
<feature type="disulfide bond" evidence="2">
    <location>
        <begin position="1102"/>
        <end position="1113"/>
    </location>
</feature>
<feature type="disulfide bond" evidence="2">
    <location>
        <begin position="1107"/>
        <end position="1122"/>
    </location>
</feature>
<feature type="disulfide bond" evidence="2">
    <location>
        <begin position="1124"/>
        <end position="1133"/>
    </location>
</feature>
<feature type="disulfide bond" evidence="2">
    <location>
        <begin position="1155"/>
        <end position="1160"/>
    </location>
</feature>
<feature type="disulfide bond" evidence="2">
    <location>
        <begin position="1171"/>
        <end position="1180"/>
    </location>
</feature>
<feature type="disulfide bond" evidence="2">
    <location>
        <begin position="1187"/>
        <end position="1198"/>
    </location>
</feature>
<feature type="disulfide bond" evidence="2">
    <location>
        <begin position="1192"/>
        <end position="1207"/>
    </location>
</feature>
<feature type="disulfide bond" evidence="2">
    <location>
        <begin position="1209"/>
        <end position="1218"/>
    </location>
</feature>
<feature type="disulfide bond" evidence="2">
    <location>
        <begin position="1225"/>
        <end position="1236"/>
    </location>
</feature>
<feature type="disulfide bond" evidence="2">
    <location>
        <begin position="1230"/>
        <end position="1245"/>
    </location>
</feature>
<feature type="disulfide bond" evidence="2">
    <location>
        <begin position="1247"/>
        <end position="1256"/>
    </location>
</feature>
<feature type="disulfide bond" evidence="2">
    <location>
        <begin position="1263"/>
        <end position="1274"/>
    </location>
</feature>
<feature type="disulfide bond" evidence="2">
    <location>
        <begin position="1268"/>
        <end position="1283"/>
    </location>
</feature>
<feature type="disulfide bond" evidence="2">
    <location>
        <begin position="1285"/>
        <end position="1294"/>
    </location>
</feature>
<feature type="disulfide bond" evidence="2">
    <location>
        <begin position="1301"/>
        <end position="1314"/>
    </location>
</feature>
<feature type="disulfide bond" evidence="2">
    <location>
        <begin position="1306"/>
        <end position="1323"/>
    </location>
</feature>
<feature type="disulfide bond" evidence="2">
    <location>
        <begin position="1325"/>
        <end position="1334"/>
    </location>
</feature>
<feature type="disulfide bond" evidence="2">
    <location>
        <begin position="1341"/>
        <end position="1352"/>
    </location>
</feature>
<feature type="disulfide bond" evidence="2">
    <location>
        <begin position="1346"/>
        <end position="1361"/>
    </location>
</feature>
<feature type="disulfide bond" evidence="2">
    <location>
        <begin position="1363"/>
        <end position="1372"/>
    </location>
</feature>
<feature type="disulfide bond" evidence="2">
    <location>
        <begin position="1379"/>
        <end position="1389"/>
    </location>
</feature>
<feature type="disulfide bond" evidence="2">
    <location>
        <begin position="1384"/>
        <end position="1400"/>
    </location>
</feature>
<feature type="disulfide bond" evidence="2">
    <location>
        <begin position="1402"/>
        <end position="1411"/>
    </location>
</feature>
<feature type="disulfide bond" evidence="2">
    <location>
        <begin position="1419"/>
        <end position="1430"/>
    </location>
</feature>
<feature type="disulfide bond" evidence="2">
    <location>
        <begin position="1424"/>
        <end position="1439"/>
    </location>
</feature>
<feature type="disulfide bond" evidence="2">
    <location>
        <begin position="1441"/>
        <end position="1450"/>
    </location>
</feature>
<feature type="disulfide bond" evidence="3">
    <location>
        <begin position="1482"/>
        <end position="1505"/>
    </location>
</feature>
<feature type="disulfide bond" evidence="3">
    <location>
        <begin position="1487"/>
        <end position="1500"/>
    </location>
</feature>
<feature type="disulfide bond" evidence="3">
    <location>
        <begin position="1496"/>
        <end position="1512"/>
    </location>
</feature>
<feature type="disulfide bond" evidence="3">
    <location>
        <begin position="1522"/>
        <end position="1545"/>
    </location>
</feature>
<feature type="disulfide bond" evidence="3">
    <location>
        <begin position="1527"/>
        <end position="1540"/>
    </location>
</feature>
<feature type="disulfide bond" evidence="3">
    <location>
        <begin position="1536"/>
        <end position="1552"/>
    </location>
</feature>
<feature type="disulfide bond" evidence="3">
    <location>
        <begin position="1559"/>
        <end position="1585"/>
    </location>
</feature>
<feature type="disulfide bond" evidence="3">
    <location>
        <begin position="1567"/>
        <end position="1580"/>
    </location>
</feature>
<feature type="disulfide bond" evidence="3">
    <location>
        <begin position="1576"/>
        <end position="1592"/>
    </location>
</feature>
<feature type="sequence variant">
    <original>I</original>
    <variation>T</variation>
    <location>
        <position position="578"/>
    </location>
</feature>
<feature type="sequence variant">
    <original>I</original>
    <variation>R</variation>
    <location>
        <position position="2044"/>
    </location>
</feature>
<feature type="sequence variant">
    <original>A</original>
    <variation>V</variation>
    <location>
        <position position="2265"/>
    </location>
</feature>
<feature type="sequence variant">
    <original>H</original>
    <variation>R</variation>
    <location>
        <position position="2407"/>
    </location>
</feature>
<feature type="sequence variant">
    <original>R</original>
    <variation>L</variation>
    <location>
        <position position="2445"/>
    </location>
</feature>
<feature type="sequence variant">
    <original>Q</original>
    <variation>QQQQQ</variation>
    <location>
        <position position="2568"/>
    </location>
</feature>
<feature type="mutagenesis site" description="In mcd5; induces loss of microchaetae sensory precursors.">
    <original>C</original>
    <variation>Y</variation>
    <location>
        <position position="739"/>
    </location>
</feature>
<feature type="mutagenesis site" description="In su42c; deltex-like mutation that induces outstreched wings and variability-fused ocelli.">
    <original>A</original>
    <variation>V</variation>
    <location>
        <position position="2060"/>
    </location>
</feature>
<feature type="mutagenesis site" description="Abolishes interaction with Nedd4 and reduces ubiquitination." evidence="10">
    <original>Y</original>
    <variation>F</variation>
    <location>
        <position position="2328"/>
    </location>
</feature>
<feature type="sequence conflict" description="In Ref. 5; CAB37610." evidence="34" ref="5">
    <original>R</original>
    <variation>G</variation>
    <location>
        <position position="9"/>
    </location>
</feature>
<feature type="sequence conflict" description="In Ref. 5; CAB37610." evidence="34" ref="5">
    <original>A</original>
    <variation>G</variation>
    <location>
        <position position="84"/>
    </location>
</feature>
<feature type="sequence conflict" description="In Ref. 1; AAB59220." evidence="34" ref="1">
    <original>M</original>
    <variation>I</variation>
    <location>
        <position position="103"/>
    </location>
</feature>
<feature type="sequence conflict" description="In Ref. 2; AAA28725." evidence="34" ref="2">
    <original>R</original>
    <variation>H</variation>
    <location>
        <position position="119"/>
    </location>
</feature>
<feature type="sequence conflict" description="In Ref. 1; AAB59220." evidence="34" ref="1">
    <original>T</original>
    <variation>I</variation>
    <location>
        <position position="231"/>
    </location>
</feature>
<feature type="sequence conflict" description="In Ref. 5; CAB37610." evidence="34" ref="5">
    <original>Q</original>
    <variation>R</variation>
    <location>
        <position position="240"/>
    </location>
</feature>
<feature type="sequence conflict" description="In Ref. 1; AAB59220." evidence="34" ref="1">
    <original>G</original>
    <variation>A</variation>
    <location>
        <position position="267"/>
    </location>
</feature>
<feature type="sequence conflict" description="In Ref. 1; AAB59220 and 2; AAA28725." evidence="34" ref="1 2">
    <original>S</original>
    <variation>T</variation>
    <location>
        <position position="1561"/>
    </location>
</feature>
<feature type="sequence conflict" description="In Ref. 2; AAA28725." evidence="34" ref="2">
    <original>G</original>
    <variation>S</variation>
    <location>
        <position position="2257"/>
    </location>
</feature>
<feature type="sequence conflict" description="In Ref. 7; AAA74496." evidence="34" ref="7">
    <original>A</original>
    <variation>E</variation>
    <location>
        <position position="2577"/>
    </location>
</feature>
<feature type="strand" evidence="37">
    <location>
        <begin position="464"/>
        <end position="468"/>
    </location>
</feature>
<feature type="strand" evidence="37">
    <location>
        <begin position="471"/>
        <end position="475"/>
    </location>
</feature>
<feature type="strand" evidence="37">
    <location>
        <begin position="480"/>
        <end position="482"/>
    </location>
</feature>
<feature type="helix" evidence="37">
    <location>
        <begin position="491"/>
        <end position="494"/>
    </location>
</feature>
<feature type="strand" evidence="37">
    <location>
        <begin position="502"/>
        <end position="506"/>
    </location>
</feature>
<feature type="strand" evidence="37">
    <location>
        <begin position="509"/>
        <end position="513"/>
    </location>
</feature>
<feature type="strand" evidence="37">
    <location>
        <begin position="518"/>
        <end position="520"/>
    </location>
</feature>
<feature type="helix" evidence="37">
    <location>
        <begin position="529"/>
        <end position="532"/>
    </location>
</feature>
<feature type="strand" evidence="37">
    <location>
        <begin position="540"/>
        <end position="544"/>
    </location>
</feature>
<feature type="strand" evidence="37">
    <location>
        <begin position="547"/>
        <end position="551"/>
    </location>
</feature>
<feature type="helix" evidence="36">
    <location>
        <begin position="1930"/>
        <end position="1950"/>
    </location>
</feature>
<feature type="helix" evidence="36">
    <location>
        <begin position="1954"/>
        <end position="1960"/>
    </location>
</feature>
<feature type="helix" evidence="36">
    <location>
        <begin position="1964"/>
        <end position="1972"/>
    </location>
</feature>
<feature type="helix" evidence="36">
    <location>
        <begin position="1987"/>
        <end position="1993"/>
    </location>
</feature>
<feature type="helix" evidence="36">
    <location>
        <begin position="1997"/>
        <end position="2004"/>
    </location>
</feature>
<feature type="helix" evidence="36">
    <location>
        <begin position="2021"/>
        <end position="2027"/>
    </location>
</feature>
<feature type="helix" evidence="36">
    <location>
        <begin position="2033"/>
        <end position="2039"/>
    </location>
</feature>
<feature type="helix" evidence="36">
    <location>
        <begin position="2054"/>
        <end position="2060"/>
    </location>
</feature>
<feature type="helix" evidence="36">
    <location>
        <begin position="2064"/>
        <end position="2072"/>
    </location>
</feature>
<feature type="helix" evidence="36">
    <location>
        <begin position="2087"/>
        <end position="2093"/>
    </location>
</feature>
<feature type="helix" evidence="36">
    <location>
        <begin position="2097"/>
        <end position="2105"/>
    </location>
</feature>
<feature type="helix" evidence="36">
    <location>
        <begin position="2120"/>
        <end position="2126"/>
    </location>
</feature>
<feature type="helix" evidence="36">
    <location>
        <begin position="2130"/>
        <end position="2136"/>
    </location>
</feature>
<evidence type="ECO:0000255" key="1"/>
<evidence type="ECO:0000255" key="2">
    <source>
        <dbReference type="PROSITE-ProRule" id="PRU00076"/>
    </source>
</evidence>
<evidence type="ECO:0000255" key="3">
    <source>
        <dbReference type="PROSITE-ProRule" id="PRU00525"/>
    </source>
</evidence>
<evidence type="ECO:0000256" key="4">
    <source>
        <dbReference type="SAM" id="MobiDB-lite"/>
    </source>
</evidence>
<evidence type="ECO:0000269" key="5">
    <source>
    </source>
</evidence>
<evidence type="ECO:0000269" key="6">
    <source>
    </source>
</evidence>
<evidence type="ECO:0000269" key="7">
    <source>
    </source>
</evidence>
<evidence type="ECO:0000269" key="8">
    <source>
    </source>
</evidence>
<evidence type="ECO:0000269" key="9">
    <source>
    </source>
</evidence>
<evidence type="ECO:0000269" key="10">
    <source>
    </source>
</evidence>
<evidence type="ECO:0000269" key="11">
    <source>
    </source>
</evidence>
<evidence type="ECO:0000269" key="12">
    <source>
    </source>
</evidence>
<evidence type="ECO:0000269" key="13">
    <source>
    </source>
</evidence>
<evidence type="ECO:0000269" key="14">
    <source>
    </source>
</evidence>
<evidence type="ECO:0000269" key="15">
    <source>
    </source>
</evidence>
<evidence type="ECO:0000269" key="16">
    <source>
    </source>
</evidence>
<evidence type="ECO:0000269" key="17">
    <source>
    </source>
</evidence>
<evidence type="ECO:0000269" key="18">
    <source>
    </source>
</evidence>
<evidence type="ECO:0000269" key="19">
    <source>
    </source>
</evidence>
<evidence type="ECO:0000269" key="20">
    <source>
    </source>
</evidence>
<evidence type="ECO:0000269" key="21">
    <source>
    </source>
</evidence>
<evidence type="ECO:0000269" key="22">
    <source>
    </source>
</evidence>
<evidence type="ECO:0000269" key="23">
    <source>
    </source>
</evidence>
<evidence type="ECO:0000269" key="24">
    <source>
    </source>
</evidence>
<evidence type="ECO:0000269" key="25">
    <source>
    </source>
</evidence>
<evidence type="ECO:0000269" key="26">
    <source>
    </source>
</evidence>
<evidence type="ECO:0000269" key="27">
    <source>
    </source>
</evidence>
<evidence type="ECO:0000269" key="28">
    <source>
    </source>
</evidence>
<evidence type="ECO:0000269" key="29">
    <source>
    </source>
</evidence>
<evidence type="ECO:0000269" key="30">
    <source>
    </source>
</evidence>
<evidence type="ECO:0000269" key="31">
    <source>
    </source>
</evidence>
<evidence type="ECO:0000269" key="32">
    <source>
    </source>
</evidence>
<evidence type="ECO:0000303" key="33">
    <source>
    </source>
</evidence>
<evidence type="ECO:0000305" key="34"/>
<evidence type="ECO:0000312" key="35">
    <source>
        <dbReference type="FlyBase" id="FBgn0004647"/>
    </source>
</evidence>
<evidence type="ECO:0007829" key="36">
    <source>
        <dbReference type="PDB" id="1OT8"/>
    </source>
</evidence>
<evidence type="ECO:0007829" key="37">
    <source>
        <dbReference type="PDB" id="7ALJ"/>
    </source>
</evidence>
<organism>
    <name type="scientific">Drosophila melanogaster</name>
    <name type="common">Fruit fly</name>
    <dbReference type="NCBI Taxonomy" id="7227"/>
    <lineage>
        <taxon>Eukaryota</taxon>
        <taxon>Metazoa</taxon>
        <taxon>Ecdysozoa</taxon>
        <taxon>Arthropoda</taxon>
        <taxon>Hexapoda</taxon>
        <taxon>Insecta</taxon>
        <taxon>Pterygota</taxon>
        <taxon>Neoptera</taxon>
        <taxon>Endopterygota</taxon>
        <taxon>Diptera</taxon>
        <taxon>Brachycera</taxon>
        <taxon>Muscomorpha</taxon>
        <taxon>Ephydroidea</taxon>
        <taxon>Drosophilidae</taxon>
        <taxon>Drosophila</taxon>
        <taxon>Sophophora</taxon>
    </lineage>
</organism>
<sequence>MQSQRSRRRSRAPNTWICFWINKMHAVASLPASLPLLLLTLAFANLPNTVRGTDTALVAASCTSVGCQNGGTCVTQLNGKTYCACDSHYVGDYCEHRNPCNSMRCQNGGTCQVTFRNGRPGISCKCPLGFDESLCEIAVPNACDHVTCLNGGTCQLKTLEEYTCACANGYTGERCETKNLCASSPCRNGATCTALAGSSSFTCSCPPGFTGDTCSYDIEECQSNPCKYGGTCVNTHGSYQCMCPTGYTGKDCDTKYKPCSPSPCQNGGICRSNGLSYECKCPKGFEGKNCEQNYDDCLGHLCQNGGTCIDGISDYTCRCPPNFTGRFCQDDVDECAQRDHPVCQNGATCTNTHGSYSCICVNGWAGLDCSNNTDDCKQAACFYGATCIDGVGSFYCQCTKGKTGLLCHLDDACTSNPCHADAICDTSPINGSYACSCATGYKGVDCSEDIDECDQGSPCEHNGICVNTPGSYRCNCSQGFTGPRCETNINECESHPCQNEGSCLDDPGTFRCVCMPGFTGTQCEIDIDECQSNPCLNDGTCHDKINGFKCSCALGFTGARCQINIDDCQSQPCRNRGICHDSIAGYSCECPPGYTGTSCEININDCDSNPCHRGKCIDDVNSFKCLCDPGYTGYICQKQINECESNPCQFDGHCQDRVGSYYCQCQAGTSGKNCEVNVNECHSNPCNNGATCIDGINSYKCQCVPGFTGQHCEKNVDECISSPCANNGVCIDQVNGYKCECPRGFYDAHCLSDVDECASNPCVNEGRCEDGINEFICHCPPGYTGKRCELDIDECSSNPCQHGGTCYDKLNAFSCQCMPGYTGQKCETNIDDCVTNPCGNGGTCIDKVNGYKCVCKVPFTGRDCESKMDPCASNRCKNEAKCTPSSNFLDFSCTCKLGYTGRYCDEDIDECSLSSPCRNGASCLNVPGSYRCLCTKGYEGRDCAINTDDCASFPCQNGGTCLDGIGDYSCLCVDGFDGKHCETDINECLSQPCQNGATCSQYVNSYTCTCPLGFSGINCQTNDEDCTESSCLNGGSCIDGINGYNCSCLAGYSGANCQYKLNKCDSNPCLNGATCHEQNNEYTCHCPSGFTGKQCSEYVDWCGQSPCENGATCSQMKHQFSCKCSAGWTGKLCDVQTISCQDAADRKGLSLRQLCNNGTCKDYGNSHVCYCSQGYAGSYCQKEIDECQSQPCQNGGTCRDLIGAYECQCRQGFQGQNCELNIDDCAPNPCQNGGTCHDRVMNFSCSCPPGTMGIICEINKDDCKPGACHNNGSCIDRVGGFECVCQPGFVGARCEGDINECLSNPCSNAGTLDCVQLVNNYHCNCRPGHMGRHCEHKVDFCAQSPCQNGGNCNIRQSGHHCICNNGFYGKNCELSGQDCDSNPCRVGNCVVADEGFGYRCECPRGTLGEHCEIDTLDECSPNPCAQGAACEDLLGDYECLCPSKWKGKRCDIYDANYPGWNGGSGSGNDRYAADLEQQRAMCDKRGCTEKQGNGICDSDCNTYACNFDGNDCSLGINPWANCTANECWNKFKNGKCNEECNNAACHYDGHDCERKLKSCDSLFDAYCQKHYGDGFCDYGCNNAECSWDGLDCENKTQSPVLAEGAMSVVMLMNVEAFREIQAQFLRNMSHMLRTTVRLKKDALGHDIIINWKDNVRVPEIEDTDFARKNKILYTQQVHQTGIQIYLEIDNRKCTECFTHAVEAAEFLAATAAKHQLRNDFQIHSVRGIKNPGDEDNGEPPANVKYVITGIILVIIALAFFGMVLSTQRKRAHGVTWFPEGFRAPAAVMSRRRRDPHGQEMRNLNKQVAMQSQGVGQPGAHWSDDESDMPLPKRQRSDPVSGVGLGNNGGYASDHTMVSEYEEADQRVWSQAHLDVVDVRAIMTPPAHQDGGKHDVDARGPCGLTPLMIAAVRGGGLDTGEDIENNEDSTAQVISDLLAQGAELNATMDKTGETSLHLAARFARADAAKRLLDAGADANCQDNTGRTPLHAAVAADAMGVFQILLRNRATNLNARMHDGTTPLILAARLAIEGMVEDLITADADINAADNSGKTALHWAAAVNNTEAVNILLMHHANRDAQDDKDETPLFLAAREGSYEACKALLDNFANREITDHMDRLPRDVASERLHHDIVRLLDEHVPRSPQMLSMTPQAMIGSPPPGQQQPQLITQPTVISAGNGGNNGNGNASGKQSNQTAKQKAAKKAKLIEGSPDNGLDATGSLRRKASSKKTSAASKKAANLNGLNPGQLTGGVSGVPGVPPTNSAAQAAAAAAAAVAAMSHELEGSPVGVGMGGNLPSPYDTSSMYSNAMAAPLANGNPNTGAKQPPSYEDCIKNAQSMQSLQGNGLDMIKLDNYAYSMGSPFQQELLNGQGLGMNGNGQRNGVGPGVLPGGLCGMGGLSGAGNGNSHEQGLSPPYSNQSPPHSVQSSLALSPHAYLGSPSPAKSRPSLPTSPTHIQAMRHATQQKQFGGSNLNSLLGGANGGGVVGGGGGGGGGVGQGPQNSPVSLGIISPTGSDMGIMLAPPQSSKNSAIMQTISPQQQQQQQQQQQQQHQQQQQQQQQQQQQQQQQLGGLEFGSAGLDLNGFCGSPDSFHSGQMNPPSIQSSMSGSSPSTNMLSPSSQHNQQAFYQYLTPSSQHSGGHTPQHLVQTLDSYPTPSPESPGHWSSSSPRSNSDWSEGVQSPAANNLYISGGHQANKGSEAIYI</sequence>
<reference key="1">
    <citation type="journal article" date="1985" name="Cell">
        <title>Nucleotide sequence from the neurogenic locus notch implies a gene product that shares homology with proteins containing EGF-like repeats.</title>
        <authorList>
            <person name="Wharton K.A."/>
            <person name="Johansen K.M."/>
            <person name="Xu T."/>
            <person name="Artavanis-Tsakonas S."/>
        </authorList>
    </citation>
    <scope>NUCLEOTIDE SEQUENCE [GENOMIC DNA]</scope>
    <scope>FUNCTION</scope>
    <source>
        <strain>Oregon-R</strain>
        <tissue>Embryo</tissue>
    </source>
</reference>
<reference key="2">
    <citation type="journal article" date="1986" name="Mol. Cell. Biol.">
        <title>Sequence of the notch locus of Drosophila melanogaster: relationship of the encoded protein to mammalian clotting and growth factors.</title>
        <authorList>
            <person name="Kidd S."/>
            <person name="Kelley M.R."/>
            <person name="Young M.W."/>
        </authorList>
    </citation>
    <scope>NUCLEOTIDE SEQUENCE [GENOMIC DNA]</scope>
    <source>
        <strain>Canton-S</strain>
        <strain>Oregon-R</strain>
        <tissue>Embryo</tissue>
    </source>
</reference>
<reference key="3">
    <citation type="journal article" date="2000" name="Science">
        <title>The genome sequence of Drosophila melanogaster.</title>
        <authorList>
            <person name="Adams M.D."/>
            <person name="Celniker S.E."/>
            <person name="Holt R.A."/>
            <person name="Evans C.A."/>
            <person name="Gocayne J.D."/>
            <person name="Amanatides P.G."/>
            <person name="Scherer S.E."/>
            <person name="Li P.W."/>
            <person name="Hoskins R.A."/>
            <person name="Galle R.F."/>
            <person name="George R.A."/>
            <person name="Lewis S.E."/>
            <person name="Richards S."/>
            <person name="Ashburner M."/>
            <person name="Henderson S.N."/>
            <person name="Sutton G.G."/>
            <person name="Wortman J.R."/>
            <person name="Yandell M.D."/>
            <person name="Zhang Q."/>
            <person name="Chen L.X."/>
            <person name="Brandon R.C."/>
            <person name="Rogers Y.-H.C."/>
            <person name="Blazej R.G."/>
            <person name="Champe M."/>
            <person name="Pfeiffer B.D."/>
            <person name="Wan K.H."/>
            <person name="Doyle C."/>
            <person name="Baxter E.G."/>
            <person name="Helt G."/>
            <person name="Nelson C.R."/>
            <person name="Miklos G.L.G."/>
            <person name="Abril J.F."/>
            <person name="Agbayani A."/>
            <person name="An H.-J."/>
            <person name="Andrews-Pfannkoch C."/>
            <person name="Baldwin D."/>
            <person name="Ballew R.M."/>
            <person name="Basu A."/>
            <person name="Baxendale J."/>
            <person name="Bayraktaroglu L."/>
            <person name="Beasley E.M."/>
            <person name="Beeson K.Y."/>
            <person name="Benos P.V."/>
            <person name="Berman B.P."/>
            <person name="Bhandari D."/>
            <person name="Bolshakov S."/>
            <person name="Borkova D."/>
            <person name="Botchan M.R."/>
            <person name="Bouck J."/>
            <person name="Brokstein P."/>
            <person name="Brottier P."/>
            <person name="Burtis K.C."/>
            <person name="Busam D.A."/>
            <person name="Butler H."/>
            <person name="Cadieu E."/>
            <person name="Center A."/>
            <person name="Chandra I."/>
            <person name="Cherry J.M."/>
            <person name="Cawley S."/>
            <person name="Dahlke C."/>
            <person name="Davenport L.B."/>
            <person name="Davies P."/>
            <person name="de Pablos B."/>
            <person name="Delcher A."/>
            <person name="Deng Z."/>
            <person name="Mays A.D."/>
            <person name="Dew I."/>
            <person name="Dietz S.M."/>
            <person name="Dodson K."/>
            <person name="Doup L.E."/>
            <person name="Downes M."/>
            <person name="Dugan-Rocha S."/>
            <person name="Dunkov B.C."/>
            <person name="Dunn P."/>
            <person name="Durbin K.J."/>
            <person name="Evangelista C.C."/>
            <person name="Ferraz C."/>
            <person name="Ferriera S."/>
            <person name="Fleischmann W."/>
            <person name="Fosler C."/>
            <person name="Gabrielian A.E."/>
            <person name="Garg N.S."/>
            <person name="Gelbart W.M."/>
            <person name="Glasser K."/>
            <person name="Glodek A."/>
            <person name="Gong F."/>
            <person name="Gorrell J.H."/>
            <person name="Gu Z."/>
            <person name="Guan P."/>
            <person name="Harris M."/>
            <person name="Harris N.L."/>
            <person name="Harvey D.A."/>
            <person name="Heiman T.J."/>
            <person name="Hernandez J.R."/>
            <person name="Houck J."/>
            <person name="Hostin D."/>
            <person name="Houston K.A."/>
            <person name="Howland T.J."/>
            <person name="Wei M.-H."/>
            <person name="Ibegwam C."/>
            <person name="Jalali M."/>
            <person name="Kalush F."/>
            <person name="Karpen G.H."/>
            <person name="Ke Z."/>
            <person name="Kennison J.A."/>
            <person name="Ketchum K.A."/>
            <person name="Kimmel B.E."/>
            <person name="Kodira C.D."/>
            <person name="Kraft C.L."/>
            <person name="Kravitz S."/>
            <person name="Kulp D."/>
            <person name="Lai Z."/>
            <person name="Lasko P."/>
            <person name="Lei Y."/>
            <person name="Levitsky A.A."/>
            <person name="Li J.H."/>
            <person name="Li Z."/>
            <person name="Liang Y."/>
            <person name="Lin X."/>
            <person name="Liu X."/>
            <person name="Mattei B."/>
            <person name="McIntosh T.C."/>
            <person name="McLeod M.P."/>
            <person name="McPherson D."/>
            <person name="Merkulov G."/>
            <person name="Milshina N.V."/>
            <person name="Mobarry C."/>
            <person name="Morris J."/>
            <person name="Moshrefi A."/>
            <person name="Mount S.M."/>
            <person name="Moy M."/>
            <person name="Murphy B."/>
            <person name="Murphy L."/>
            <person name="Muzny D.M."/>
            <person name="Nelson D.L."/>
            <person name="Nelson D.R."/>
            <person name="Nelson K.A."/>
            <person name="Nixon K."/>
            <person name="Nusskern D.R."/>
            <person name="Pacleb J.M."/>
            <person name="Palazzolo M."/>
            <person name="Pittman G.S."/>
            <person name="Pan S."/>
            <person name="Pollard J."/>
            <person name="Puri V."/>
            <person name="Reese M.G."/>
            <person name="Reinert K."/>
            <person name="Remington K."/>
            <person name="Saunders R.D.C."/>
            <person name="Scheeler F."/>
            <person name="Shen H."/>
            <person name="Shue B.C."/>
            <person name="Siden-Kiamos I."/>
            <person name="Simpson M."/>
            <person name="Skupski M.P."/>
            <person name="Smith T.J."/>
            <person name="Spier E."/>
            <person name="Spradling A.C."/>
            <person name="Stapleton M."/>
            <person name="Strong R."/>
            <person name="Sun E."/>
            <person name="Svirskas R."/>
            <person name="Tector C."/>
            <person name="Turner R."/>
            <person name="Venter E."/>
            <person name="Wang A.H."/>
            <person name="Wang X."/>
            <person name="Wang Z.-Y."/>
            <person name="Wassarman D.A."/>
            <person name="Weinstock G.M."/>
            <person name="Weissenbach J."/>
            <person name="Williams S.M."/>
            <person name="Woodage T."/>
            <person name="Worley K.C."/>
            <person name="Wu D."/>
            <person name="Yang S."/>
            <person name="Yao Q.A."/>
            <person name="Ye J."/>
            <person name="Yeh R.-F."/>
            <person name="Zaveri J.S."/>
            <person name="Zhan M."/>
            <person name="Zhang G."/>
            <person name="Zhao Q."/>
            <person name="Zheng L."/>
            <person name="Zheng X.H."/>
            <person name="Zhong F.N."/>
            <person name="Zhong W."/>
            <person name="Zhou X."/>
            <person name="Zhu S.C."/>
            <person name="Zhu X."/>
            <person name="Smith H.O."/>
            <person name="Gibbs R.A."/>
            <person name="Myers E.W."/>
            <person name="Rubin G.M."/>
            <person name="Venter J.C."/>
        </authorList>
    </citation>
    <scope>NUCLEOTIDE SEQUENCE [LARGE SCALE GENOMIC DNA]</scope>
    <source>
        <strain>Berkeley</strain>
    </source>
</reference>
<reference key="4">
    <citation type="journal article" date="2002" name="Genome Biol.">
        <title>Annotation of the Drosophila melanogaster euchromatic genome: a systematic review.</title>
        <authorList>
            <person name="Misra S."/>
            <person name="Crosby M.A."/>
            <person name="Mungall C.J."/>
            <person name="Matthews B.B."/>
            <person name="Campbell K.S."/>
            <person name="Hradecky P."/>
            <person name="Huang Y."/>
            <person name="Kaminker J.S."/>
            <person name="Millburn G.H."/>
            <person name="Prochnik S.E."/>
            <person name="Smith C.D."/>
            <person name="Tupy J.L."/>
            <person name="Whitfield E.J."/>
            <person name="Bayraktaroglu L."/>
            <person name="Berman B.P."/>
            <person name="Bettencourt B.R."/>
            <person name="Celniker S.E."/>
            <person name="de Grey A.D.N.J."/>
            <person name="Drysdale R.A."/>
            <person name="Harris N.L."/>
            <person name="Richter J."/>
            <person name="Russo S."/>
            <person name="Schroeder A.J."/>
            <person name="Shu S.Q."/>
            <person name="Stapleton M."/>
            <person name="Yamada C."/>
            <person name="Ashburner M."/>
            <person name="Gelbart W.M."/>
            <person name="Rubin G.M."/>
            <person name="Lewis S.E."/>
        </authorList>
    </citation>
    <scope>GENOME REANNOTATION</scope>
    <source>
        <strain>Berkeley</strain>
    </source>
</reference>
<reference key="5">
    <citation type="journal article" date="2000" name="Science">
        <title>From sequence to chromosome: the tip of the X chromosome of D. melanogaster.</title>
        <authorList>
            <person name="Benos P.V."/>
            <person name="Gatt M.K."/>
            <person name="Ashburner M."/>
            <person name="Murphy L."/>
            <person name="Harris D."/>
            <person name="Barrell B.G."/>
            <person name="Ferraz C."/>
            <person name="Vidal S."/>
            <person name="Brun C."/>
            <person name="Demailles J."/>
            <person name="Cadieu E."/>
            <person name="Dreano S."/>
            <person name="Gloux S."/>
            <person name="Lelaure V."/>
            <person name="Mottier S."/>
            <person name="Galibert F."/>
            <person name="Borkova D."/>
            <person name="Minana B."/>
            <person name="Kafatos F.C."/>
            <person name="Louis C."/>
            <person name="Siden-Kiamos I."/>
            <person name="Bolshakov S."/>
            <person name="Papagiannakis G."/>
            <person name="Spanos L."/>
            <person name="Cox S."/>
            <person name="Madueno E."/>
            <person name="de Pablos B."/>
            <person name="Modolell J."/>
            <person name="Peter A."/>
            <person name="Schoettler P."/>
            <person name="Werner M."/>
            <person name="Mourkioti F."/>
            <person name="Beinert N."/>
            <person name="Dowe G."/>
            <person name="Schaefer U."/>
            <person name="Jaeckle H."/>
            <person name="Bucheton A."/>
            <person name="Callister D.M."/>
            <person name="Campbell L.A."/>
            <person name="Darlamitsou A."/>
            <person name="Henderson N.S."/>
            <person name="McMillan P.J."/>
            <person name="Salles C."/>
            <person name="Tait E.A."/>
            <person name="Valenti P."/>
            <person name="Saunders R.D.C."/>
            <person name="Glover D.M."/>
        </authorList>
    </citation>
    <scope>NUCLEOTIDE SEQUENCE [LARGE SCALE GENOMIC DNA]</scope>
    <source>
        <strain>Oregon-R</strain>
    </source>
</reference>
<reference key="6">
    <citation type="journal article" date="1987" name="Mol. Cell. Biol.">
        <title>Restriction of P-element insertions at the Notch locus of Drosophila melanogaster.</title>
        <authorList>
            <person name="Kelley M.R."/>
            <person name="Kidd S."/>
            <person name="Berg R.L."/>
            <person name="Young M.W."/>
        </authorList>
    </citation>
    <scope>NUCLEOTIDE SEQUENCE [GENOMIC DNA] OF 1-8</scope>
</reference>
<reference key="7">
    <citation type="journal article" date="1985" name="Cell">
        <title>opa: a novel family of transcribed repeats shared by the Notch locus and other developmentally regulated loci in D. melanogaster.</title>
        <authorList>
            <person name="Wharton K.A."/>
            <person name="Yedvobnick B."/>
            <person name="Finnerty V.G."/>
            <person name="Artavanis-Tsakonas S."/>
        </authorList>
    </citation>
    <scope>NUCLEOTIDE SEQUENCE [GENOMIC DNA] OF 2505-2611</scope>
    <source>
        <strain>Oregon-R</strain>
        <tissue>Embryo</tissue>
    </source>
</reference>
<reference key="8">
    <citation type="journal article" date="1989" name="Nucleic Acids Res.">
        <title>Hypervariability of simple sequences as a general source for polymorphic DNA markers.</title>
        <authorList>
            <person name="Tautz D."/>
        </authorList>
    </citation>
    <scope>NUCLEOTIDE SEQUENCE [GENOMIC DNA] OF 2505-2604</scope>
</reference>
<reference key="9">
    <citation type="journal article" date="1994" name="Development">
        <title>Cytosolic interaction between deltex and Notch ankyrin repeats implicates deltex in the Notch signaling pathway.</title>
        <authorList>
            <person name="Diederich R.J."/>
            <person name="Matsuno K."/>
            <person name="Hing H."/>
            <person name="Artavanis-Tsakonas S."/>
        </authorList>
    </citation>
    <scope>INTERACTION WITH DX</scope>
    <scope>MUTANT SU42C</scope>
</reference>
<reference key="10">
    <citation type="journal article" date="1995" name="Development">
        <title>Deltex acts as a positive regulator of Notch signaling through interactions with the Notch ankyrin repeats.</title>
        <authorList>
            <person name="Matsuno K."/>
            <person name="Diederich R.J."/>
            <person name="Go M.J."/>
            <person name="Blaumueller C.M."/>
            <person name="Artavanis-Tsakonas S."/>
        </authorList>
    </citation>
    <scope>FUNCTION</scope>
    <scope>INTERACTION WITH DX</scope>
</reference>
<reference key="11">
    <citation type="journal article" date="1999" name="Nature">
        <title>Presenilin is required for activity and nuclear access of Notch in Drosophila.</title>
        <authorList>
            <person name="Struhl G."/>
            <person name="Greenwald I."/>
        </authorList>
    </citation>
    <scope>S3 CLEAVAGE BY PSN</scope>
</reference>
<reference key="12">
    <citation type="journal article" date="1999" name="Nature">
        <title>Neurogenic phenotypes and altered Notch processing in Drosophila Presenilin mutants.</title>
        <authorList>
            <person name="Ye Y."/>
            <person name="Lukinova N."/>
            <person name="Fortini M.E."/>
        </authorList>
    </citation>
    <scope>S3 CLEAVAGE BY PSN</scope>
</reference>
<reference key="13">
    <citation type="journal article" date="2000" name="Nature">
        <title>Glycosyltransferase activity of Fringe modulates Notch-Delta interactions.</title>
        <authorList>
            <person name="Bruckner K."/>
            <person name="Perez L."/>
            <person name="Clausen H."/>
            <person name="Cohen S."/>
        </authorList>
    </citation>
    <scope>FUNCTION</scope>
    <scope>INTERACTION WITH DELTA</scope>
    <scope>GLYCOSYLATION</scope>
</reference>
<reference key="14">
    <citation type="journal article" date="2001" name="Curr. Biol.">
        <title>Novel Notch alleles reveal a Deltex-dependent pathway repressing neural fate.</title>
        <authorList>
            <person name="Ramain P."/>
            <person name="Khechumian K."/>
            <person name="Seugnet L."/>
            <person name="Arbogast N."/>
            <person name="Ackermann C."/>
            <person name="Heitzler P."/>
        </authorList>
    </citation>
    <scope>FUNCTION</scope>
    <scope>MUTANT MCD5</scope>
</reference>
<reference key="15">
    <citation type="journal article" date="2002" name="Genes Dev.">
        <title>Kuzbanian-mediated cleavage of Drosophila Notch.</title>
        <authorList>
            <person name="Lieber T."/>
            <person name="Kidd S."/>
            <person name="Young M.W."/>
        </authorList>
    </citation>
    <scope>S2 CLEAVAGE BY KUZ</scope>
</reference>
<reference key="16">
    <citation type="journal article" date="2002" name="Hereditas">
        <title>General outlines of the molecular genetics of the Notch signalling pathway in Drosophila melanogaster: a review.</title>
        <authorList>
            <person name="Portin P."/>
        </authorList>
    </citation>
    <scope>FUNCTION</scope>
    <scope>REVIEW</scope>
</reference>
<reference key="17">
    <citation type="journal article" date="2003" name="J. Biol. Chem.">
        <title>Modulation of notch-ligand binding by protein O-fucosyltransferase 1 and fringe.</title>
        <authorList>
            <person name="Okajima T."/>
            <person name="Xu A."/>
            <person name="Irvine K.D."/>
        </authorList>
    </citation>
    <scope>FUNCTION</scope>
    <scope>GLYCOSYLATION</scope>
    <scope>LIGAND-BINDING</scope>
</reference>
<reference key="18">
    <citation type="journal article" date="2004" name="Curr. Biol.">
        <title>Drosophila Nedd4 regulates endocytosis of notch and suppresses its ligand-independent activation.</title>
        <authorList>
            <person name="Sakata T."/>
            <person name="Sakaguchi H."/>
            <person name="Tsuda L."/>
            <person name="Higashitani A."/>
            <person name="Aigaki T."/>
            <person name="Matsuno K."/>
            <person name="Hayashi S."/>
        </authorList>
    </citation>
    <scope>INTERACTION WITH NEDD4</scope>
    <scope>UBIQUITINATION</scope>
    <scope>MUTAGENESIS OF TYR-2328</scope>
</reference>
<reference key="19">
    <citation type="journal article" date="2004" name="Curr. Biol.">
        <title>Regulation of notch endosomal sorting and signaling by Drosophila Nedd4 family proteins.</title>
        <authorList>
            <person name="Wilkin M.B."/>
            <person name="Carbery A.-M."/>
            <person name="Fostier M."/>
            <person name="Aslam H."/>
            <person name="Mazaleyrat S.L."/>
            <person name="Higgs J."/>
            <person name="Myat A."/>
            <person name="Evans D.A.P."/>
            <person name="Cornell M."/>
            <person name="Baron M."/>
        </authorList>
    </citation>
    <scope>FUNCTION</scope>
    <scope>INTERACTION WITH SU(DX)</scope>
</reference>
<reference key="20">
    <citation type="journal article" date="2006" name="Curr. Biol.">
        <title>Lethal giant discs, a novel C2-domain protein, restricts notch activation during endocytosis.</title>
        <authorList>
            <person name="Childress J.L."/>
            <person name="Acar M."/>
            <person name="Tao C."/>
            <person name="Halder G."/>
        </authorList>
    </citation>
    <scope>FUNCTION</scope>
</reference>
<reference key="21">
    <citation type="journal article" date="2006" name="Dev. Cell">
        <title>The conserved c2 domain protein lethal (2) giant discs regulates protein trafficking in Drosophila.</title>
        <authorList>
            <person name="Gallagher C.M."/>
            <person name="Knoblich J.A."/>
        </authorList>
    </citation>
    <scope>FUNCTION</scope>
</reference>
<reference key="22">
    <citation type="journal article" date="2006" name="Dev. Cell">
        <title>The Drosophila Notch inhibitor and tumor suppressor gene lethal (2) giant discs encodes a conserved regulator of endosomal trafficking.</title>
        <authorList>
            <person name="Jaekel R."/>
            <person name="Klein T."/>
        </authorList>
    </citation>
    <scope>FUNCTION</scope>
</reference>
<reference key="23">
    <citation type="journal article" date="2007" name="Development">
        <title>The O-fucosyltransferase O-fut1 is an extracellular component that is essential for the constitutive endocytic trafficking of Notch in Drosophila.</title>
        <authorList>
            <person name="Sasamura T."/>
            <person name="Ishikawa H.O."/>
            <person name="Sasaki N."/>
            <person name="Higashi S."/>
            <person name="Kanai M."/>
            <person name="Nakao S."/>
            <person name="Ayukawa T."/>
            <person name="Aigaki T."/>
            <person name="Noda K."/>
            <person name="Miyoshi E."/>
            <person name="Taniguchi N."/>
            <person name="Matsuno K."/>
        </authorList>
    </citation>
    <scope>SUBCELLULAR LOCATION</scope>
    <scope>INTERACTION WITH O-FUT1</scope>
</reference>
<reference key="24">
    <citation type="journal article" date="2008" name="Cell">
        <title>Rumi is a CAP10 domain glycosyltransferase that modifies Notch and is required for Notch signaling.</title>
        <authorList>
            <person name="Acar M."/>
            <person name="Jafar-Nejad H."/>
            <person name="Takeuchi H."/>
            <person name="Rajan A."/>
            <person name="Ibrani D."/>
            <person name="Rana N.A."/>
            <person name="Pan H."/>
            <person name="Haltiwanger R.S."/>
            <person name="Bellen H.J."/>
        </authorList>
    </citation>
    <scope>FUNCTION</scope>
    <scope>GLYCOSYLATION</scope>
</reference>
<reference key="25">
    <citation type="journal article" date="2008" name="Dev. Cell">
        <title>The tumor suppressors Brat and Numb regulate transit-amplifying neuroblast lineages in Drosophila.</title>
        <authorList>
            <person name="Bowman S.K."/>
            <person name="Rolland V."/>
            <person name="Betschinger J."/>
            <person name="Kinsey K.A."/>
            <person name="Emery G."/>
            <person name="Knoblich J.A."/>
        </authorList>
    </citation>
    <scope>FUNCTION</scope>
    <scope>DISRUPTION PHENOTYPE</scope>
</reference>
<reference key="26">
    <citation type="journal article" date="2008" name="J. Proteome Res.">
        <title>Phosphoproteome analysis of Drosophila melanogaster embryos.</title>
        <authorList>
            <person name="Zhai B."/>
            <person name="Villen J."/>
            <person name="Beausoleil S.A."/>
            <person name="Mintseris J."/>
            <person name="Gygi S.P."/>
        </authorList>
    </citation>
    <scope>PHOSPHORYLATION [LARGE SCALE ANALYSIS] AT SER-2447</scope>
    <scope>IDENTIFICATION BY MASS SPECTROMETRY</scope>
    <source>
        <tissue>Embryo</tissue>
    </source>
</reference>
<reference key="27">
    <citation type="journal article" date="2010" name="Dev. Cell">
        <title>dFezf/Earmuff maintains the restricted developmental potential of intermediate neural progenitors in Drosophila.</title>
        <authorList>
            <person name="Weng M."/>
            <person name="Golden K.L."/>
            <person name="Lee C.Y."/>
        </authorList>
    </citation>
    <scope>FUNCTION</scope>
</reference>
<reference key="28">
    <citation type="journal article" date="2011" name="J. Cell Biol.">
        <title>Synergy between the ESCRT-III complex and Deltex defines a ligand-independent Notch signal.</title>
        <authorList>
            <person name="Hori K."/>
            <person name="Sen A."/>
            <person name="Kirchhausen T."/>
            <person name="Artavanis-Tsakonas S."/>
        </authorList>
    </citation>
    <scope>FUNCTION</scope>
    <scope>SUBCELLULAR LOCATION</scope>
    <scope>UBIQUITINATION</scope>
</reference>
<reference key="29">
    <citation type="journal article" date="2011" name="Dev. Biol.">
        <title>The bHLH factor deadpan is a direct target of Notch signaling and regulates neuroblast self-renewal in Drosophila.</title>
        <authorList>
            <person name="San-Juan B.P."/>
            <person name="Baonza A."/>
        </authorList>
    </citation>
    <scope>FUNCTION</scope>
</reference>
<reference key="30">
    <citation type="journal article" date="2012" name="PLoS ONE">
        <title>The bHLH repressor Deadpan regulates the self-renewal and specification of Drosophila larval neural stem cells independently of Notch.</title>
        <authorList>
            <person name="Zhu S."/>
            <person name="Wildonger J."/>
            <person name="Barshow S."/>
            <person name="Younger S."/>
            <person name="Huang Y."/>
            <person name="Lee T."/>
        </authorList>
    </citation>
    <scope>FUNCTION</scope>
    <scope>DISRUPTION PHENOTYPE</scope>
</reference>
<reference key="31">
    <citation type="journal article" date="2013" name="J. Cell Sci.">
        <title>Activation of Notch in lgd mutant cells requires the fusion of late endosomes with the lysosome.</title>
        <authorList>
            <person name="Schneider M."/>
            <person name="Troost T."/>
            <person name="Grawe F."/>
            <person name="Martinez-Arias A."/>
            <person name="Klein T."/>
        </authorList>
    </citation>
    <scope>FUNCTION</scope>
</reference>
<reference key="32">
    <citation type="journal article" date="2014" name="Mol. Biol. Cell">
        <title>Interaction of the HOPS complex with Syntaxin 17 mediates autophagosome clearance in Drosophila.</title>
        <authorList>
            <person name="Takats S."/>
            <person name="Pircs K."/>
            <person name="Nagy P."/>
            <person name="Varga A."/>
            <person name="Karpati M."/>
            <person name="Hegedus K."/>
            <person name="Kramer H."/>
            <person name="Kovacs A.L."/>
            <person name="Sass M."/>
            <person name="Juhasz G."/>
        </authorList>
    </citation>
    <scope>DEVELOPMENTAL STAGE</scope>
</reference>
<reference key="33">
    <citation type="journal article" date="2015" name="Development">
        <title>Lgd regulates the activity of the BMP/Dpp signalling pathway during Drosophila oogenesis.</title>
        <authorList>
            <person name="Morawa K.S."/>
            <person name="Schneider M."/>
            <person name="Klein T."/>
        </authorList>
    </citation>
    <scope>DEVELOPMENTAL STAGE</scope>
</reference>
<reference key="34">
    <citation type="journal article" date="2016" name="J. Biol. Chem.">
        <title>Mapping sites of O-glycosylation and fringe elongation on Drosophila Notch.</title>
        <authorList>
            <person name="Harvey B.M."/>
            <person name="Rana N.A."/>
            <person name="Moss H."/>
            <person name="Leonardi J."/>
            <person name="Jafar-Nejad H."/>
            <person name="Haltiwanger R.S."/>
        </authorList>
    </citation>
    <scope>GLYCOSYLATION AT THR-72; THR-110; THR-153; SER-183; THR-191; THR-210; SER-223; THR-231; THR-307; THR-348; THR-386; SER-427; THR-481; SER-494; SER-502; THR-519; SER-532; SER-570; THR-595; SER-608; SER-645; SER-683; THR-691; SER-721; SER-759; SER-797; THR-805; THR-822; THR-843; SER-922; SER-952; THR-960; SER-990; THR-998; SER-1036; SER-1066; THR-1074; THR-1112; SER-1189; THR-1197; THR-1235; SER-1273; SER-1303 AND SER-1381</scope>
</reference>
<reference key="35">
    <citation type="journal article" date="2016" name="Development">
        <title>Notch maintains Drosophila type II neuroblasts by suppressing expression of the Fez transcription factor Earmuff.</title>
        <authorList>
            <person name="Li X."/>
            <person name="Xie Y."/>
            <person name="Zhu S."/>
        </authorList>
    </citation>
    <scope>FUNCTION</scope>
    <scope>DISRUPTION PHENOTYPE</scope>
</reference>
<reference key="36">
    <citation type="journal article" date="2017" name="Dev. Biol.">
        <title>bHLH-O proteins balance the self-renewal and differentiation of Drosophila neural stem cells by regulating Earmuff expression.</title>
        <authorList>
            <person name="Li X."/>
            <person name="Chen R."/>
            <person name="Zhu S."/>
        </authorList>
    </citation>
    <scope>FUNCTION</scope>
</reference>
<reference key="37">
    <citation type="journal article" date="2018" name="PLoS Genet.">
        <title>AKAP200 promotes Notch stability by protecting it from Cbl/lysosome-mediated degradation in Drosophila melanogaster.</title>
        <authorList>
            <person name="Bala Tannan N."/>
            <person name="Collu G."/>
            <person name="Humphries A.C."/>
            <person name="Serysheva E."/>
            <person name="Weber U."/>
            <person name="Mlodzik M."/>
        </authorList>
    </citation>
    <scope>INTERACTION WITH AKAP200</scope>
    <scope>UBIQUITINATION</scope>
</reference>
<reference key="38">
    <citation type="journal article" date="2020" name="BMC Biol.">
        <title>Lethal (2) giant discs (Lgd)/CC2D1 is required for the full activity of the ESCRT machinery.</title>
        <authorList>
            <person name="Baeumers M."/>
            <person name="Ruhnau K."/>
            <person name="Breuer T."/>
            <person name="Pannen H."/>
            <person name="Goerlich B."/>
            <person name="Kniebel A."/>
            <person name="Haensch S."/>
            <person name="Weidtkamp-Peters S."/>
            <person name="Schmitt L."/>
            <person name="Klein T."/>
        </authorList>
    </citation>
    <scope>FUNCTION</scope>
</reference>
<reference key="39">
    <citation type="journal article" date="2003" name="Protein Sci.">
        <title>Structure and stability of the ankyrin domain of the Drosophila Notch receptor.</title>
        <authorList>
            <person name="Zweifel M.E."/>
            <person name="Leahy D.J."/>
            <person name="Hughson F.M."/>
            <person name="Barrick D."/>
        </authorList>
    </citation>
    <scope>X-RAY CRYSTALLOGRAPHY (2.0 ANGSTROMS) OF 1901-2139</scope>
    <scope>DOMAIN ANK REPEATS</scope>
    <scope>SUBUNIT</scope>
</reference>
<comment type="function">
    <text evidence="5 6 7 8 11 12 13 14 16 18 19 20 21 22 23 26 28 30 31 33">Essential signaling protein which has a major role in many developmental processes (PubMed:3935325). Functions as a receptor for membrane-bound ligands Delta and Serrate to regulate cell-fate determination (PubMed:10935637, PubMed:12909620, PubMed:15620650, PubMed:18243100). Upon ligand activation, and releasing from the cell membrane, the Notch intracellular domain (NICD) forms a transcriptional activator complex with Su(H) (Suppressor of hairless) and activates genes of the E(spl) complex (PubMed:7671825). Regulates oogenesis, the differentiation of the ectoderm and the development of the central and peripheral nervous system, eye, wing disk, muscles and segmental appendages such as antennae and legs, through lateral inhibition or induction (PubMed:11719214, PubMed:12369105, PubMed:3935325). Regulates neuroblast self-renewal, identity and proliferation through the regulation of bHLH-O proteins; in larval brains, involved in the maintenance of type II neuroblast self-renewal and identity by suppressing erm expression together with pnt; might also regulate dpn expression through the activation of the transcriptional regulator Su(H) (PubMed:18342578, PubMed:20152183, PubMed:21262215, PubMed:23056424, PubMed:27151950, PubMed:28899667). Targeted for ESCRT-mediated endosomal sequestration and lysosomal degradation by various E3 ubiquitin ligases to regulate the Notch signaling pathway (PubMed:17084358, PubMed:22162134, PubMed:33349255). Can undergo ligand-dependent and non-canonical ligand-independent activation (PubMed:22162134). Ligand-independent activation is dependent on endosome acidification and probably occurs in late endosomes or lysosome (PubMed:23178945). Ectopic ligand-independent activation occurs when disruption of the endolysosomal pathway, particularly of the ESCRT-III complex, prevents sequestration of the receptor in intraluminal vesicles of multivesicular bodies (PubMed:17084357, PubMed:17084358, PubMed:17088062, PubMed:23178945).</text>
</comment>
<comment type="subunit">
    <text evidence="5 9 10 11 15 29 31 32">Homomer. Interacts with Su(H) when activated. Interacts with Dx via its ANK repeats. Interacts with Delta via the EGF repeats and the Delta EGF repeats. Interacts with Nedd4 and Su(dx). Interacts with O-fut1; the interaction glycosylates N and transports N to early endosomes. Interacts with Akap200; the interaction stabilizes N/Notch protein levels by preventing Cbl-mediated ubiquitination and subsequent lysosomal degradation of N/Notch (PubMed:29309414).</text>
</comment>
<comment type="interaction">
    <interactant intactId="EBI-103438">
        <id>P07207</id>
    </interactant>
    <interactant intactId="EBI-498204">
        <id>Q95TT5</id>
        <label>cno</label>
    </interactant>
    <organismsDiffer>false</organismsDiffer>
    <experiments>2</experiments>
</comment>
<comment type="interaction">
    <interactant intactId="EBI-103438">
        <id>P07207</id>
    </interactant>
    <interactant intactId="EBI-115346">
        <id>P10041</id>
        <label>Delta</label>
    </interactant>
    <organismsDiffer>false</organismsDiffer>
    <experiments>2</experiments>
</comment>
<comment type="interaction">
    <interactant intactId="EBI-103438">
        <id>P07207</id>
    </interactant>
    <interactant intactId="EBI-190618">
        <id>Q23985</id>
        <label>dx</label>
    </interactant>
    <organismsDiffer>false</organismsDiffer>
    <experiments>4</experiments>
</comment>
<comment type="interaction">
    <interactant intactId="EBI-103438">
        <id>P07207</id>
    </interactant>
    <interactant intactId="EBI-92180">
        <id>P28159</id>
        <label>Su(H)</label>
    </interactant>
    <organismsDiffer>false</organismsDiffer>
    <experiments>7</experiments>
</comment>
<comment type="subcellular location">
    <subcellularLocation>
        <location evidence="15">Cell membrane</location>
        <topology evidence="15">Single-pass type I membrane protein</topology>
    </subcellularLocation>
    <subcellularLocation>
        <location evidence="15">Endosome</location>
    </subcellularLocation>
    <subcellularLocation>
        <location evidence="21">Endosome</location>
        <location evidence="21">Multivesicular body</location>
    </subcellularLocation>
    <text evidence="21">Transported to early endosomes by O-fut1 (PubMed:17329366). Targeting to the endolysosomal pathway is regulated by protein ubiquitination and reliant on the ESCRT-III complex (PubMed:22162134). Colocalizes with dx/deltex on multivesicular bodies (PubMed:22162134).</text>
</comment>
<comment type="subcellular location">
    <molecule>Processed neurogenic locus Notch protein</molecule>
    <subcellularLocation>
        <location>Nucleus</location>
    </subcellularLocation>
    <text>Upon activation and S3 cleavage, it is released from the cell membrane and enters into the nucleus in conjunction with Su(H).</text>
</comment>
<comment type="developmental stage">
    <text evidence="24 25">Expressed in follicle epithelial cells and, to a lesser extent, germline cells of the developing oocyte (at protein level). Expressed in larval developing ommatidia (at protein level) (PubMed:24554766).</text>
</comment>
<comment type="domain">
    <text evidence="9">Crystal structure of the ANK repeat domain shows that there are 7 repeats and the stabilizing C-terminal repeat enhances the protein stability by extending the ankyrin domain.</text>
</comment>
<comment type="PTM">
    <text>Upon binding its ligands such as Delta or Serrate, it is cleaved (S2 cleavage) in its extracellular domain, close to the transmembrane domain. S2 cleavage is probably mediated by Kuz. It is then cleaved (S3 cleavage) downstream of its transmembrane domain, releasing it from the cell membrane. S3 cleavage requires Psn.</text>
</comment>
<comment type="PTM">
    <text evidence="5 8 16 27">O-glycosylated (PubMed:27268051). Three forms of O-glycosylation (O-fucosylation, O-glucosylation and O-GlcNAcylation) are detected (PubMed:27268051). O-fucosylated by O-fut1 and fng in the EGF repeat domain inhibits both Serrate/Ser- and Delta/Dl-binding (PubMed:10935637, PubMed:12909620). O-glucosylation by rumi in the endoplasmic reticulum is necessary for correct folding and signaling (PubMed:18243100).</text>
</comment>
<comment type="PTM">
    <text evidence="10 21 29">Ubiquitinated by various ubiquitin ligases; which promotes ligand-independent endocytosis and proteasomal degradation (PubMed:15620649, PubMed:22162134). Ubiquitinated by Nedd4 (PubMed:15620649). May also be ubiquitinated by Su(dx) and Cbl (PubMed:29309414). Mono-ubiquitinated, possibly by dx/deltex; this may be involved in the ESCRT-III mediated targeting to multivesicular bodies (PubMed:22162134).</text>
</comment>
<comment type="disruption phenotype">
    <text evidence="18 22 26">RNAi-mediated knockdown in the larval brain neuroblasts abolishes the expression of pnt, induces the ectopic expression of erm, results in the ectopic expression of Ase in type II neuroblasts (NBs) and their premature loss (PubMed:18342578, PubMed:23056424, PubMed:27151950). Simultaneous RNAi-mediated knockdown of pnt partially restores normal neuroblast numbers and inhibits ectopic erm expression (PubMed:27151950).</text>
</comment>
<comment type="similarity">
    <text evidence="34">Belongs to the NOTCH family.</text>
</comment>
<dbReference type="EMBL" id="M16152">
    <property type="protein sequence ID" value="AAB59220.1"/>
    <property type="molecule type" value="Genomic_DNA"/>
</dbReference>
<dbReference type="EMBL" id="M16153">
    <property type="protein sequence ID" value="AAB59220.1"/>
    <property type="status" value="JOINED"/>
    <property type="molecule type" value="Genomic_DNA"/>
</dbReference>
<dbReference type="EMBL" id="M16149">
    <property type="protein sequence ID" value="AAB59220.1"/>
    <property type="status" value="JOINED"/>
    <property type="molecule type" value="Genomic_DNA"/>
</dbReference>
<dbReference type="EMBL" id="M16150">
    <property type="protein sequence ID" value="AAB59220.1"/>
    <property type="status" value="JOINED"/>
    <property type="molecule type" value="Genomic_DNA"/>
</dbReference>
<dbReference type="EMBL" id="M16151">
    <property type="protein sequence ID" value="AAB59220.1"/>
    <property type="status" value="JOINED"/>
    <property type="molecule type" value="Genomic_DNA"/>
</dbReference>
<dbReference type="EMBL" id="K03508">
    <property type="protein sequence ID" value="AAA28725.1"/>
    <property type="molecule type" value="Genomic_DNA"/>
</dbReference>
<dbReference type="EMBL" id="M13689">
    <property type="protein sequence ID" value="AAA28725.1"/>
    <property type="status" value="JOINED"/>
    <property type="molecule type" value="Genomic_DNA"/>
</dbReference>
<dbReference type="EMBL" id="K03507">
    <property type="protein sequence ID" value="AAA28725.1"/>
    <property type="status" value="JOINED"/>
    <property type="molecule type" value="Genomic_DNA"/>
</dbReference>
<dbReference type="EMBL" id="AE014298">
    <property type="protein sequence ID" value="AAF45848.2"/>
    <property type="molecule type" value="Genomic_DNA"/>
</dbReference>
<dbReference type="EMBL" id="AL035436">
    <property type="protein sequence ID" value="CAB37610.1"/>
    <property type="molecule type" value="Genomic_DNA"/>
</dbReference>
<dbReference type="EMBL" id="AL035395">
    <property type="protein sequence ID" value="CAB37610.1"/>
    <property type="status" value="JOINED"/>
    <property type="molecule type" value="Genomic_DNA"/>
</dbReference>
<dbReference type="EMBL" id="M16025">
    <property type="protein sequence ID" value="AAA28726.1"/>
    <property type="molecule type" value="Genomic_DNA"/>
</dbReference>
<dbReference type="EMBL" id="M12175">
    <property type="protein sequence ID" value="AAA74496.1"/>
    <property type="molecule type" value="Genomic_DNA"/>
</dbReference>
<dbReference type="PIR" id="A24420">
    <property type="entry name" value="A24420"/>
</dbReference>
<dbReference type="RefSeq" id="NP_001245510.1">
    <property type="nucleotide sequence ID" value="NM_001258581.2"/>
</dbReference>
<dbReference type="RefSeq" id="NP_476859.2">
    <property type="nucleotide sequence ID" value="NM_057511.4"/>
</dbReference>
<dbReference type="PDB" id="1OT8">
    <property type="method" value="X-ray"/>
    <property type="resolution" value="2.00 A"/>
    <property type="chains" value="A/B/C=1902-2139"/>
</dbReference>
<dbReference type="PDB" id="2JMF">
    <property type="method" value="NMR"/>
    <property type="chains" value="B=2318-2333"/>
</dbReference>
<dbReference type="PDB" id="7ALJ">
    <property type="method" value="X-ray"/>
    <property type="resolution" value="1.52 A"/>
    <property type="chains" value="A=449-564"/>
</dbReference>
<dbReference type="PDBsum" id="1OT8"/>
<dbReference type="PDBsum" id="2JMF"/>
<dbReference type="PDBsum" id="7ALJ"/>
<dbReference type="SMR" id="P07207"/>
<dbReference type="BioGRID" id="57823">
    <property type="interactions" value="309"/>
</dbReference>
<dbReference type="ComplexPortal" id="CPX-2337">
    <property type="entry name" value="CSL-Notch-Mastermind transcriptional activation complex"/>
</dbReference>
<dbReference type="DIP" id="DIP-5N"/>
<dbReference type="FunCoup" id="P07207">
    <property type="interactions" value="664"/>
</dbReference>
<dbReference type="IntAct" id="P07207">
    <property type="interactions" value="233"/>
</dbReference>
<dbReference type="MINT" id="P07207"/>
<dbReference type="STRING" id="7227.FBpp0070483"/>
<dbReference type="GlyCosmos" id="P07207">
    <property type="glycosylation" value="55 sites, No reported glycans"/>
</dbReference>
<dbReference type="GlyGen" id="P07207">
    <property type="glycosylation" value="69 sites, 1 O-linked glycan (18 sites)"/>
</dbReference>
<dbReference type="iPTMnet" id="P07207"/>
<dbReference type="PaxDb" id="7227-FBpp0070483"/>
<dbReference type="DNASU" id="31293"/>
<dbReference type="EnsemblMetazoa" id="FBtr0070507">
    <property type="protein sequence ID" value="FBpp0070483"/>
    <property type="gene ID" value="FBgn0004647"/>
</dbReference>
<dbReference type="EnsemblMetazoa" id="FBtr0304659">
    <property type="protein sequence ID" value="FBpp0293201"/>
    <property type="gene ID" value="FBgn0004647"/>
</dbReference>
<dbReference type="GeneID" id="31293"/>
<dbReference type="KEGG" id="dme:Dmel_CG3936"/>
<dbReference type="AGR" id="FB:FBgn0004647"/>
<dbReference type="CTD" id="31293"/>
<dbReference type="FlyBase" id="FBgn0004647">
    <property type="gene designation" value="N"/>
</dbReference>
<dbReference type="VEuPathDB" id="VectorBase:FBgn0004647"/>
<dbReference type="eggNOG" id="KOG1217">
    <property type="taxonomic scope" value="Eukaryota"/>
</dbReference>
<dbReference type="GeneTree" id="ENSGT00980000198606"/>
<dbReference type="HOGENOM" id="CLU_000576_0_1_1"/>
<dbReference type="InParanoid" id="P07207"/>
<dbReference type="OMA" id="TCHEQRD"/>
<dbReference type="OrthoDB" id="283575at2759"/>
<dbReference type="PhylomeDB" id="P07207"/>
<dbReference type="SignaLink" id="P07207"/>
<dbReference type="BioGRID-ORCS" id="31293">
    <property type="hits" value="0 hits in 3 CRISPR screens"/>
</dbReference>
<dbReference type="ChiTaRS" id="N">
    <property type="organism name" value="fly"/>
</dbReference>
<dbReference type="EvolutionaryTrace" id="P07207"/>
<dbReference type="GenomeRNAi" id="31293"/>
<dbReference type="PRO" id="PR:P07207"/>
<dbReference type="Proteomes" id="UP000000803">
    <property type="component" value="Chromosome X"/>
</dbReference>
<dbReference type="Bgee" id="FBgn0004647">
    <property type="expression patterns" value="Expressed in nurse follicle cell (Drosophila) in ovary and 195 other cell types or tissues"/>
</dbReference>
<dbReference type="ExpressionAtlas" id="P07207">
    <property type="expression patterns" value="baseline and differential"/>
</dbReference>
<dbReference type="GO" id="GO:0005912">
    <property type="term" value="C:adherens junction"/>
    <property type="evidence" value="ECO:0000315"/>
    <property type="project" value="FlyBase"/>
</dbReference>
<dbReference type="GO" id="GO:0016324">
    <property type="term" value="C:apical plasma membrane"/>
    <property type="evidence" value="ECO:0000315"/>
    <property type="project" value="FlyBase"/>
</dbReference>
<dbReference type="GO" id="GO:0009986">
    <property type="term" value="C:cell surface"/>
    <property type="evidence" value="ECO:0000314"/>
    <property type="project" value="FlyBase"/>
</dbReference>
<dbReference type="GO" id="GO:1990433">
    <property type="term" value="C:CSL-Notch-Mastermind transcription factor complex"/>
    <property type="evidence" value="ECO:0000314"/>
    <property type="project" value="FlyBase"/>
</dbReference>
<dbReference type="GO" id="GO:0005737">
    <property type="term" value="C:cytoplasm"/>
    <property type="evidence" value="ECO:0000314"/>
    <property type="project" value="FlyBase"/>
</dbReference>
<dbReference type="GO" id="GO:0005829">
    <property type="term" value="C:cytosol"/>
    <property type="evidence" value="ECO:0000304"/>
    <property type="project" value="Reactome"/>
</dbReference>
<dbReference type="GO" id="GO:0005769">
    <property type="term" value="C:early endosome"/>
    <property type="evidence" value="ECO:0000314"/>
    <property type="project" value="FlyBase"/>
</dbReference>
<dbReference type="GO" id="GO:0030139">
    <property type="term" value="C:endocytic vesicle"/>
    <property type="evidence" value="ECO:0000314"/>
    <property type="project" value="FlyBase"/>
</dbReference>
<dbReference type="GO" id="GO:0005783">
    <property type="term" value="C:endoplasmic reticulum"/>
    <property type="evidence" value="ECO:0000315"/>
    <property type="project" value="FlyBase"/>
</dbReference>
<dbReference type="GO" id="GO:0005788">
    <property type="term" value="C:endoplasmic reticulum lumen"/>
    <property type="evidence" value="ECO:0000304"/>
    <property type="project" value="Reactome"/>
</dbReference>
<dbReference type="GO" id="GO:0005768">
    <property type="term" value="C:endosome"/>
    <property type="evidence" value="ECO:0000314"/>
    <property type="project" value="FlyBase"/>
</dbReference>
<dbReference type="GO" id="GO:0005796">
    <property type="term" value="C:Golgi lumen"/>
    <property type="evidence" value="ECO:0000304"/>
    <property type="project" value="Reactome"/>
</dbReference>
<dbReference type="GO" id="GO:0005770">
    <property type="term" value="C:late endosome"/>
    <property type="evidence" value="ECO:0000314"/>
    <property type="project" value="FlyBase"/>
</dbReference>
<dbReference type="GO" id="GO:0016020">
    <property type="term" value="C:membrane"/>
    <property type="evidence" value="ECO:0000314"/>
    <property type="project" value="FlyBase"/>
</dbReference>
<dbReference type="GO" id="GO:0005771">
    <property type="term" value="C:multivesicular body"/>
    <property type="evidence" value="ECO:0007669"/>
    <property type="project" value="UniProtKB-SubCell"/>
</dbReference>
<dbReference type="GO" id="GO:0005654">
    <property type="term" value="C:nucleoplasm"/>
    <property type="evidence" value="ECO:0000304"/>
    <property type="project" value="Reactome"/>
</dbReference>
<dbReference type="GO" id="GO:0005634">
    <property type="term" value="C:nucleus"/>
    <property type="evidence" value="ECO:0000314"/>
    <property type="project" value="FlyBase"/>
</dbReference>
<dbReference type="GO" id="GO:0005886">
    <property type="term" value="C:plasma membrane"/>
    <property type="evidence" value="ECO:0000314"/>
    <property type="project" value="FlyBase"/>
</dbReference>
<dbReference type="GO" id="GO:0032991">
    <property type="term" value="C:protein-containing complex"/>
    <property type="evidence" value="ECO:0000353"/>
    <property type="project" value="FlyBase"/>
</dbReference>
<dbReference type="GO" id="GO:0005509">
    <property type="term" value="F:calcium ion binding"/>
    <property type="evidence" value="ECO:0007669"/>
    <property type="project" value="InterPro"/>
</dbReference>
<dbReference type="GO" id="GO:0003682">
    <property type="term" value="F:chromatin binding"/>
    <property type="evidence" value="ECO:0000314"/>
    <property type="project" value="FlyBase"/>
</dbReference>
<dbReference type="GO" id="GO:0035035">
    <property type="term" value="F:histone acetyltransferase binding"/>
    <property type="evidence" value="ECO:0000353"/>
    <property type="project" value="FlyBase"/>
</dbReference>
<dbReference type="GO" id="GO:0003713">
    <property type="term" value="F:transcription coactivator activity"/>
    <property type="evidence" value="ECO:0000314"/>
    <property type="project" value="FlyBase"/>
</dbReference>
<dbReference type="GO" id="GO:0004888">
    <property type="term" value="F:transmembrane signaling receptor activity"/>
    <property type="evidence" value="ECO:0000314"/>
    <property type="project" value="FlyBase"/>
</dbReference>
<dbReference type="GO" id="GO:0050699">
    <property type="term" value="F:WW domain binding"/>
    <property type="evidence" value="ECO:0000314"/>
    <property type="project" value="FlyBase"/>
</dbReference>
<dbReference type="GO" id="GO:0007015">
    <property type="term" value="P:actin filament organization"/>
    <property type="evidence" value="ECO:0000315"/>
    <property type="project" value="FlyBase"/>
</dbReference>
<dbReference type="GO" id="GO:0008356">
    <property type="term" value="P:asymmetric cell division"/>
    <property type="evidence" value="ECO:0000304"/>
    <property type="project" value="FlyBase"/>
</dbReference>
<dbReference type="GO" id="GO:0007411">
    <property type="term" value="P:axon guidance"/>
    <property type="evidence" value="ECO:0000315"/>
    <property type="project" value="FlyBase"/>
</dbReference>
<dbReference type="GO" id="GO:0007298">
    <property type="term" value="P:border follicle cell migration"/>
    <property type="evidence" value="ECO:0000315"/>
    <property type="project" value="FlyBase"/>
</dbReference>
<dbReference type="GO" id="GO:0043697">
    <property type="term" value="P:cell dedifferentiation"/>
    <property type="evidence" value="ECO:0000316"/>
    <property type="project" value="UniProtKB"/>
</dbReference>
<dbReference type="GO" id="GO:0030154">
    <property type="term" value="P:cell differentiation"/>
    <property type="evidence" value="ECO:0000315"/>
    <property type="project" value="FlyBase"/>
</dbReference>
<dbReference type="GO" id="GO:0045165">
    <property type="term" value="P:cell fate commitment"/>
    <property type="evidence" value="ECO:0000315"/>
    <property type="project" value="FlyBase"/>
</dbReference>
<dbReference type="GO" id="GO:0022416">
    <property type="term" value="P:chaeta development"/>
    <property type="evidence" value="ECO:0000315"/>
    <property type="project" value="FlyBase"/>
</dbReference>
<dbReference type="GO" id="GO:0008407">
    <property type="term" value="P:chaeta morphogenesis"/>
    <property type="evidence" value="ECO:0000315"/>
    <property type="project" value="FlyBase"/>
</dbReference>
<dbReference type="GO" id="GO:0060289">
    <property type="term" value="P:compartment boundary maintenance"/>
    <property type="evidence" value="ECO:0000315"/>
    <property type="project" value="FlyBase"/>
</dbReference>
<dbReference type="GO" id="GO:0048749">
    <property type="term" value="P:compound eye development"/>
    <property type="evidence" value="ECO:0000315"/>
    <property type="project" value="FlyBase"/>
</dbReference>
<dbReference type="GO" id="GO:0001745">
    <property type="term" value="P:compound eye morphogenesis"/>
    <property type="evidence" value="ECO:0000315"/>
    <property type="project" value="FlyBase"/>
</dbReference>
<dbReference type="GO" id="GO:0046667">
    <property type="term" value="P:compound eye retinal cell programmed cell death"/>
    <property type="evidence" value="ECO:0000304"/>
    <property type="project" value="FlyBase"/>
</dbReference>
<dbReference type="GO" id="GO:0042688">
    <property type="term" value="P:crystal cell differentiation"/>
    <property type="evidence" value="ECO:0000315"/>
    <property type="project" value="FlyBase"/>
</dbReference>
<dbReference type="GO" id="GO:0002213">
    <property type="term" value="P:defense response to insect"/>
    <property type="evidence" value="ECO:0000314"/>
    <property type="project" value="FlyBase"/>
</dbReference>
<dbReference type="GO" id="GO:0008340">
    <property type="term" value="P:determination of adult lifespan"/>
    <property type="evidence" value="ECO:0000315"/>
    <property type="project" value="FlyBase"/>
</dbReference>
<dbReference type="GO" id="GO:0046843">
    <property type="term" value="P:dorsal appendage formation"/>
    <property type="evidence" value="ECO:0000315"/>
    <property type="project" value="FlyBase"/>
</dbReference>
<dbReference type="GO" id="GO:0007391">
    <property type="term" value="P:dorsal closure"/>
    <property type="evidence" value="ECO:0000304"/>
    <property type="project" value="FlyBase"/>
</dbReference>
<dbReference type="GO" id="GO:0009950">
    <property type="term" value="P:dorsal/ventral axis specification"/>
    <property type="evidence" value="ECO:0000315"/>
    <property type="project" value="FlyBase"/>
</dbReference>
<dbReference type="GO" id="GO:0035162">
    <property type="term" value="P:embryonic hemopoiesis"/>
    <property type="evidence" value="ECO:0000315"/>
    <property type="project" value="FlyBase"/>
</dbReference>
<dbReference type="GO" id="GO:0061331">
    <property type="term" value="P:epithelial cell proliferation involved in Malpighian tubule morphogenesis"/>
    <property type="evidence" value="ECO:0000315"/>
    <property type="project" value="FlyBase"/>
</dbReference>
<dbReference type="GO" id="GO:0035153">
    <property type="term" value="P:epithelial cell type specification, open tracheal system"/>
    <property type="evidence" value="ECO:0000315"/>
    <property type="project" value="FlyBase"/>
</dbReference>
<dbReference type="GO" id="GO:0035214">
    <property type="term" value="P:eye-antennal disc development"/>
    <property type="evidence" value="ECO:0000315"/>
    <property type="project" value="FlyBase"/>
</dbReference>
<dbReference type="GO" id="GO:0007455">
    <property type="term" value="P:eye-antennal disc morphogenesis"/>
    <property type="evidence" value="ECO:0000315"/>
    <property type="project" value="FlyBase"/>
</dbReference>
<dbReference type="GO" id="GO:0036099">
    <property type="term" value="P:female germ-line stem cell population maintenance"/>
    <property type="evidence" value="ECO:0000315"/>
    <property type="project" value="FlyBase"/>
</dbReference>
<dbReference type="GO" id="GO:0030707">
    <property type="term" value="P:follicle cell of egg chamber development"/>
    <property type="evidence" value="ECO:0000315"/>
    <property type="project" value="FlyBase"/>
</dbReference>
<dbReference type="GO" id="GO:0007297">
    <property type="term" value="P:follicle cell of egg chamber migration"/>
    <property type="evidence" value="ECO:0000315"/>
    <property type="project" value="FlyBase"/>
</dbReference>
<dbReference type="GO" id="GO:0030713">
    <property type="term" value="P:follicle cell of egg chamber stalk formation"/>
    <property type="evidence" value="ECO:0000315"/>
    <property type="project" value="FlyBase"/>
</dbReference>
<dbReference type="GO" id="GO:0007440">
    <property type="term" value="P:foregut morphogenesis"/>
    <property type="evidence" value="ECO:0000315"/>
    <property type="project" value="FlyBase"/>
</dbReference>
<dbReference type="GO" id="GO:0060288">
    <property type="term" value="P:formation of a compartment boundary"/>
    <property type="evidence" value="ECO:0000315"/>
    <property type="project" value="FlyBase"/>
</dbReference>
<dbReference type="GO" id="GO:0030718">
    <property type="term" value="P:germ-line stem cell population maintenance"/>
    <property type="evidence" value="ECO:0000315"/>
    <property type="project" value="FlyBase"/>
</dbReference>
<dbReference type="GO" id="GO:0060250">
    <property type="term" value="P:germ-line stem-cell niche homeostasis"/>
    <property type="evidence" value="ECO:0000315"/>
    <property type="project" value="FlyBase"/>
</dbReference>
<dbReference type="GO" id="GO:0007293">
    <property type="term" value="P:germarium-derived egg chamber formation"/>
    <property type="evidence" value="ECO:0000315"/>
    <property type="project" value="FlyBase"/>
</dbReference>
<dbReference type="GO" id="GO:0010001">
    <property type="term" value="P:glial cell differentiation"/>
    <property type="evidence" value="ECO:0000315"/>
    <property type="project" value="FlyBase"/>
</dbReference>
<dbReference type="GO" id="GO:0007403">
    <property type="term" value="P:glial cell fate determination"/>
    <property type="evidence" value="ECO:0000315"/>
    <property type="project" value="FlyBase"/>
</dbReference>
<dbReference type="GO" id="GO:0008347">
    <property type="term" value="P:glial cell migration"/>
    <property type="evidence" value="ECO:0000315"/>
    <property type="project" value="FlyBase"/>
</dbReference>
<dbReference type="GO" id="GO:0035172">
    <property type="term" value="P:hemocyte proliferation"/>
    <property type="evidence" value="ECO:0000315"/>
    <property type="project" value="FlyBase"/>
</dbReference>
<dbReference type="GO" id="GO:0016348">
    <property type="term" value="P:imaginal disc-derived leg joint morphogenesis"/>
    <property type="evidence" value="ECO:0000315"/>
    <property type="project" value="FlyBase"/>
</dbReference>
<dbReference type="GO" id="GO:0007480">
    <property type="term" value="P:imaginal disc-derived leg morphogenesis"/>
    <property type="evidence" value="ECO:0000315"/>
    <property type="project" value="FlyBase"/>
</dbReference>
<dbReference type="GO" id="GO:0036011">
    <property type="term" value="P:imaginal disc-derived leg segmentation"/>
    <property type="evidence" value="ECO:0000315"/>
    <property type="project" value="FlyBase"/>
</dbReference>
<dbReference type="GO" id="GO:0048803">
    <property type="term" value="P:imaginal disc-derived male genitalia morphogenesis"/>
    <property type="evidence" value="ECO:0000315"/>
    <property type="project" value="FlyBase"/>
</dbReference>
<dbReference type="GO" id="GO:0008587">
    <property type="term" value="P:imaginal disc-derived wing margin morphogenesis"/>
    <property type="evidence" value="ECO:0000315"/>
    <property type="project" value="FlyBase"/>
</dbReference>
<dbReference type="GO" id="GO:0007476">
    <property type="term" value="P:imaginal disc-derived wing morphogenesis"/>
    <property type="evidence" value="ECO:0000315"/>
    <property type="project" value="FlyBase"/>
</dbReference>
<dbReference type="GO" id="GO:0007474">
    <property type="term" value="P:imaginal disc-derived wing vein specification"/>
    <property type="evidence" value="ECO:0000315"/>
    <property type="project" value="FlyBase"/>
</dbReference>
<dbReference type="GO" id="GO:0036335">
    <property type="term" value="P:intestinal stem cell homeostasis"/>
    <property type="evidence" value="ECO:0000315"/>
    <property type="project" value="FlyBase"/>
</dbReference>
<dbReference type="GO" id="GO:0035171">
    <property type="term" value="P:lamellocyte differentiation"/>
    <property type="evidence" value="ECO:0000315"/>
    <property type="project" value="FlyBase"/>
</dbReference>
<dbReference type="GO" id="GO:0035167">
    <property type="term" value="P:larval lymph gland hemopoiesis"/>
    <property type="evidence" value="ECO:0000315"/>
    <property type="project" value="FlyBase"/>
</dbReference>
<dbReference type="GO" id="GO:0046331">
    <property type="term" value="P:lateral inhibition"/>
    <property type="evidence" value="ECO:0000304"/>
    <property type="project" value="FlyBase"/>
</dbReference>
<dbReference type="GO" id="GO:0007478">
    <property type="term" value="P:leg disc morphogenesis"/>
    <property type="evidence" value="ECO:0000304"/>
    <property type="project" value="FlyBase"/>
</dbReference>
<dbReference type="GO" id="GO:0007616">
    <property type="term" value="P:long-term memory"/>
    <property type="evidence" value="ECO:0000315"/>
    <property type="project" value="FlyBase"/>
</dbReference>
<dbReference type="GO" id="GO:0048542">
    <property type="term" value="P:lymph gland development"/>
    <property type="evidence" value="ECO:0000315"/>
    <property type="project" value="FlyBase"/>
</dbReference>
<dbReference type="GO" id="GO:0061382">
    <property type="term" value="P:Malpighian tubule tip cell differentiation"/>
    <property type="evidence" value="ECO:0000315"/>
    <property type="project" value="FlyBase"/>
</dbReference>
<dbReference type="GO" id="GO:0007498">
    <property type="term" value="P:mesoderm development"/>
    <property type="evidence" value="ECO:0000315"/>
    <property type="project" value="FlyBase"/>
</dbReference>
<dbReference type="GO" id="GO:0060571">
    <property type="term" value="P:morphogenesis of an epithelial fold"/>
    <property type="evidence" value="ECO:0000315"/>
    <property type="project" value="FlyBase"/>
</dbReference>
<dbReference type="GO" id="GO:0008045">
    <property type="term" value="P:motor neuron axon guidance"/>
    <property type="evidence" value="ECO:0000315"/>
    <property type="project" value="FlyBase"/>
</dbReference>
<dbReference type="GO" id="GO:0046716">
    <property type="term" value="P:muscle cell cellular homeostasis"/>
    <property type="evidence" value="ECO:0000315"/>
    <property type="project" value="FlyBase"/>
</dbReference>
<dbReference type="GO" id="GO:0007521">
    <property type="term" value="P:muscle cell fate determination"/>
    <property type="evidence" value="ECO:0000315"/>
    <property type="project" value="FlyBase"/>
</dbReference>
<dbReference type="GO" id="GO:0048627">
    <property type="term" value="P:myoblast development"/>
    <property type="evidence" value="ECO:0000270"/>
    <property type="project" value="FlyBase"/>
</dbReference>
<dbReference type="GO" id="GO:2000048">
    <property type="term" value="P:negative regulation of cell-cell adhesion mediated by cadherin"/>
    <property type="evidence" value="ECO:0000315"/>
    <property type="project" value="FlyBase"/>
</dbReference>
<dbReference type="GO" id="GO:0045316">
    <property type="term" value="P:negative regulation of compound eye photoreceptor development"/>
    <property type="evidence" value="ECO:0000315"/>
    <property type="project" value="FlyBase"/>
</dbReference>
<dbReference type="GO" id="GO:0010629">
    <property type="term" value="P:negative regulation of gene expression"/>
    <property type="evidence" value="ECO:0000315"/>
    <property type="project" value="UniProtKB"/>
</dbReference>
<dbReference type="GO" id="GO:0035204">
    <property type="term" value="P:negative regulation of lamellocyte differentiation"/>
    <property type="evidence" value="ECO:0000315"/>
    <property type="project" value="FlyBase"/>
</dbReference>
<dbReference type="GO" id="GO:0050768">
    <property type="term" value="P:negative regulation of neurogenesis"/>
    <property type="evidence" value="ECO:0000315"/>
    <property type="project" value="FlyBase"/>
</dbReference>
<dbReference type="GO" id="GO:0050877">
    <property type="term" value="P:nervous system process"/>
    <property type="evidence" value="ECO:0000315"/>
    <property type="project" value="FlyBase"/>
</dbReference>
<dbReference type="GO" id="GO:0014019">
    <property type="term" value="P:neuroblast development"/>
    <property type="evidence" value="ECO:0000315"/>
    <property type="project" value="UniProtKB"/>
</dbReference>
<dbReference type="GO" id="GO:0007400">
    <property type="term" value="P:neuroblast fate determination"/>
    <property type="evidence" value="ECO:0000314"/>
    <property type="project" value="FlyBase"/>
</dbReference>
<dbReference type="GO" id="GO:0014018">
    <property type="term" value="P:neuroblast fate specification"/>
    <property type="evidence" value="ECO:0000315"/>
    <property type="project" value="UniProtKB"/>
</dbReference>
<dbReference type="GO" id="GO:0007405">
    <property type="term" value="P:neuroblast proliferation"/>
    <property type="evidence" value="ECO:0000315"/>
    <property type="project" value="UniProtKB"/>
</dbReference>
<dbReference type="GO" id="GO:0048664">
    <property type="term" value="P:neuron fate determination"/>
    <property type="evidence" value="ECO:0000315"/>
    <property type="project" value="FlyBase"/>
</dbReference>
<dbReference type="GO" id="GO:0048665">
    <property type="term" value="P:neuron fate specification"/>
    <property type="evidence" value="ECO:0000315"/>
    <property type="project" value="FlyBase"/>
</dbReference>
<dbReference type="GO" id="GO:0097150">
    <property type="term" value="P:neuronal stem cell population maintenance"/>
    <property type="evidence" value="ECO:0000315"/>
    <property type="project" value="FlyBase"/>
</dbReference>
<dbReference type="GO" id="GO:0007219">
    <property type="term" value="P:Notch signaling pathway"/>
    <property type="evidence" value="ECO:0000314"/>
    <property type="project" value="FlyBase"/>
</dbReference>
<dbReference type="GO" id="GO:0016318">
    <property type="term" value="P:ommatidial rotation"/>
    <property type="evidence" value="ECO:0000316"/>
    <property type="project" value="FlyBase"/>
</dbReference>
<dbReference type="GO" id="GO:0030720">
    <property type="term" value="P:oocyte localization involved in germarium-derived egg chamber formation"/>
    <property type="evidence" value="ECO:0000315"/>
    <property type="project" value="FlyBase"/>
</dbReference>
<dbReference type="GO" id="GO:0048477">
    <property type="term" value="P:oogenesis"/>
    <property type="evidence" value="ECO:0000315"/>
    <property type="project" value="FlyBase"/>
</dbReference>
<dbReference type="GO" id="GO:0007422">
    <property type="term" value="P:peripheral nervous system development"/>
    <property type="evidence" value="ECO:0000315"/>
    <property type="project" value="FlyBase"/>
</dbReference>
<dbReference type="GO" id="GO:0008284">
    <property type="term" value="P:positive regulation of cell population proliferation"/>
    <property type="evidence" value="ECO:0000315"/>
    <property type="project" value="FlyBase"/>
</dbReference>
<dbReference type="GO" id="GO:0042691">
    <property type="term" value="P:positive regulation of crystal cell differentiation"/>
    <property type="evidence" value="ECO:0000315"/>
    <property type="project" value="FlyBase"/>
</dbReference>
<dbReference type="GO" id="GO:0045893">
    <property type="term" value="P:positive regulation of DNA-templated transcription"/>
    <property type="evidence" value="ECO:0000315"/>
    <property type="project" value="FlyBase"/>
</dbReference>
<dbReference type="GO" id="GO:1900087">
    <property type="term" value="P:positive regulation of G1/S transition of mitotic cell cycle"/>
    <property type="evidence" value="ECO:0000315"/>
    <property type="project" value="FlyBase"/>
</dbReference>
<dbReference type="GO" id="GO:0010628">
    <property type="term" value="P:positive regulation of gene expression"/>
    <property type="evidence" value="ECO:0000314"/>
    <property type="project" value="FlyBase"/>
</dbReference>
<dbReference type="GO" id="GO:0002052">
    <property type="term" value="P:positive regulation of neuroblast proliferation"/>
    <property type="evidence" value="ECO:0000315"/>
    <property type="project" value="UniProtKB"/>
</dbReference>
<dbReference type="GO" id="GO:0043525">
    <property type="term" value="P:positive regulation of neuron apoptotic process"/>
    <property type="evidence" value="ECO:0000315"/>
    <property type="project" value="FlyBase"/>
</dbReference>
<dbReference type="GO" id="GO:0045944">
    <property type="term" value="P:positive regulation of transcription by RNA polymerase II"/>
    <property type="evidence" value="ECO:0000314"/>
    <property type="project" value="FlyBase"/>
</dbReference>
<dbReference type="GO" id="GO:0048052">
    <property type="term" value="P:R1/R6 cell differentiation"/>
    <property type="evidence" value="ECO:0000315"/>
    <property type="project" value="FlyBase"/>
</dbReference>
<dbReference type="GO" id="GO:0048056">
    <property type="term" value="P:R3/R4 cell differentiation"/>
    <property type="evidence" value="ECO:0000315"/>
    <property type="project" value="FlyBase"/>
</dbReference>
<dbReference type="GO" id="GO:0045466">
    <property type="term" value="P:R7 cell differentiation"/>
    <property type="evidence" value="ECO:0000315"/>
    <property type="project" value="FlyBase"/>
</dbReference>
<dbReference type="GO" id="GO:0042686">
    <property type="term" value="P:regulation of cardioblast cell fate specification"/>
    <property type="evidence" value="ECO:0000315"/>
    <property type="project" value="FlyBase"/>
</dbReference>
<dbReference type="GO" id="GO:0045595">
    <property type="term" value="P:regulation of cell differentiation"/>
    <property type="evidence" value="ECO:0000315"/>
    <property type="project" value="FlyBase"/>
</dbReference>
<dbReference type="GO" id="GO:0051489">
    <property type="term" value="P:regulation of filopodium assembly"/>
    <property type="evidence" value="ECO:0000315"/>
    <property type="project" value="FlyBase"/>
</dbReference>
<dbReference type="GO" id="GO:0006110">
    <property type="term" value="P:regulation of glycolytic process"/>
    <property type="evidence" value="ECO:0000315"/>
    <property type="project" value="FlyBase"/>
</dbReference>
<dbReference type="GO" id="GO:0040008">
    <property type="term" value="P:regulation of growth"/>
    <property type="evidence" value="ECO:0000315"/>
    <property type="project" value="FlyBase"/>
</dbReference>
<dbReference type="GO" id="GO:0007346">
    <property type="term" value="P:regulation of mitotic cell cycle"/>
    <property type="evidence" value="ECO:0000304"/>
    <property type="project" value="FlyBase"/>
</dbReference>
<dbReference type="GO" id="GO:1902692">
    <property type="term" value="P:regulation of neuroblast proliferation"/>
    <property type="evidence" value="ECO:0000315"/>
    <property type="project" value="UniProtKB"/>
</dbReference>
<dbReference type="GO" id="GO:0050767">
    <property type="term" value="P:regulation of neurogenesis"/>
    <property type="evidence" value="ECO:0000315"/>
    <property type="project" value="FlyBase"/>
</dbReference>
<dbReference type="GO" id="GO:2000035">
    <property type="term" value="P:regulation of stem cell division"/>
    <property type="evidence" value="ECO:0000315"/>
    <property type="project" value="FlyBase"/>
</dbReference>
<dbReference type="GO" id="GO:0009608">
    <property type="term" value="P:response to symbiont"/>
    <property type="evidence" value="ECO:0000315"/>
    <property type="project" value="FlyBase"/>
</dbReference>
<dbReference type="GO" id="GO:0046666">
    <property type="term" value="P:retinal cell programmed cell death"/>
    <property type="evidence" value="ECO:0000304"/>
    <property type="project" value="FlyBase"/>
</dbReference>
<dbReference type="GO" id="GO:0016330">
    <property type="term" value="P:second mitotic wave involved in compound eye morphogenesis"/>
    <property type="evidence" value="ECO:0000315"/>
    <property type="project" value="FlyBase"/>
</dbReference>
<dbReference type="GO" id="GO:0007423">
    <property type="term" value="P:sensory organ development"/>
    <property type="evidence" value="ECO:0000315"/>
    <property type="project" value="FlyBase"/>
</dbReference>
<dbReference type="GO" id="GO:0016360">
    <property type="term" value="P:sensory organ precursor cell fate determination"/>
    <property type="evidence" value="ECO:0000315"/>
    <property type="project" value="FlyBase"/>
</dbReference>
<dbReference type="GO" id="GO:0048863">
    <property type="term" value="P:stem cell differentiation"/>
    <property type="evidence" value="ECO:0000315"/>
    <property type="project" value="FlyBase"/>
</dbReference>
<dbReference type="GO" id="GO:0048190">
    <property type="term" value="P:wing disc dorsal/ventral pattern formation"/>
    <property type="evidence" value="ECO:0000315"/>
    <property type="project" value="FlyBase"/>
</dbReference>
<dbReference type="GO" id="GO:0035222">
    <property type="term" value="P:wing disc pattern formation"/>
    <property type="evidence" value="ECO:0000315"/>
    <property type="project" value="FlyBase"/>
</dbReference>
<dbReference type="CDD" id="cd00054">
    <property type="entry name" value="EGF_CA"/>
    <property type="match status" value="27"/>
</dbReference>
<dbReference type="CDD" id="cd21706">
    <property type="entry name" value="JMTM_dNotch"/>
    <property type="match status" value="1"/>
</dbReference>
<dbReference type="FunFam" id="2.10.25.10:FF:000012">
    <property type="entry name" value="Delta-like protein"/>
    <property type="match status" value="1"/>
</dbReference>
<dbReference type="FunFam" id="2.10.25.10:FF:000117">
    <property type="entry name" value="Delta-like protein"/>
    <property type="match status" value="1"/>
</dbReference>
<dbReference type="FunFam" id="2.10.25.10:FF:000151">
    <property type="entry name" value="FAT atypical cadherin 4"/>
    <property type="match status" value="1"/>
</dbReference>
<dbReference type="FunFam" id="1.25.40.20:FF:000005">
    <property type="entry name" value="Neurogenic locus notch 1"/>
    <property type="match status" value="1"/>
</dbReference>
<dbReference type="FunFam" id="2.10.25.10:FF:000004">
    <property type="entry name" value="Neurogenic locus notch 1"/>
    <property type="match status" value="10"/>
</dbReference>
<dbReference type="FunFam" id="2.10.25.10:FF:000080">
    <property type="entry name" value="Neurogenic locus notch 1"/>
    <property type="match status" value="2"/>
</dbReference>
<dbReference type="FunFam" id="2.10.25.10:FF:000136">
    <property type="entry name" value="Neurogenic locus notch 1"/>
    <property type="match status" value="1"/>
</dbReference>
<dbReference type="FunFam" id="3.30.300.320:FF:000001">
    <property type="entry name" value="Neurogenic locus notch 1"/>
    <property type="match status" value="1"/>
</dbReference>
<dbReference type="FunFam" id="2.10.25.10:FF:000031">
    <property type="entry name" value="neurogenic locus notch homolog protein 3"/>
    <property type="match status" value="1"/>
</dbReference>
<dbReference type="FunFam" id="2.10.25.10:FF:000327">
    <property type="entry name" value="neurogenic locus notch homolog protein 4"/>
    <property type="match status" value="1"/>
</dbReference>
<dbReference type="FunFam" id="2.10.25.10:FF:000092">
    <property type="entry name" value="Neurogenic locus notch protein 1"/>
    <property type="match status" value="1"/>
</dbReference>
<dbReference type="FunFam" id="2.10.25.10:FF:000127">
    <property type="entry name" value="Neurogenic locus notch protein 1"/>
    <property type="match status" value="1"/>
</dbReference>
<dbReference type="FunFam" id="2.10.25.10:FF:000125">
    <property type="entry name" value="Neurogenic locus notch protein-like"/>
    <property type="match status" value="2"/>
</dbReference>
<dbReference type="FunFam" id="2.10.25.10:FF:000095">
    <property type="entry name" value="Notch, isoform B"/>
    <property type="match status" value="1"/>
</dbReference>
<dbReference type="FunFam" id="3.30.70.3310:FF:000005">
    <property type="entry name" value="Notch, isoform B"/>
    <property type="match status" value="1"/>
</dbReference>
<dbReference type="FunFam" id="2.10.25.10:FF:000520">
    <property type="entry name" value="Predicted protein"/>
    <property type="match status" value="1"/>
</dbReference>
<dbReference type="FunFam" id="2.10.25.10:FF:000143">
    <property type="entry name" value="Protein crumbs 1"/>
    <property type="match status" value="1"/>
</dbReference>
<dbReference type="FunFam" id="2.10.25.10:FF:000122">
    <property type="entry name" value="Protein crumbs homolog 2"/>
    <property type="match status" value="1"/>
</dbReference>
<dbReference type="FunFam" id="2.10.25.10:FF:000321">
    <property type="entry name" value="Protein delta homolog 1"/>
    <property type="match status" value="2"/>
</dbReference>
<dbReference type="FunFam" id="2.10.25.10:FF:000471">
    <property type="entry name" value="Protein lin-12"/>
    <property type="match status" value="1"/>
</dbReference>
<dbReference type="FunFam" id="2.10.25.10:FF:000255">
    <property type="entry name" value="Sushi, nidogen and EGF-like domains 1"/>
    <property type="match status" value="1"/>
</dbReference>
<dbReference type="Gene3D" id="3.30.300.320">
    <property type="match status" value="1"/>
</dbReference>
<dbReference type="Gene3D" id="3.30.70.3310">
    <property type="match status" value="1"/>
</dbReference>
<dbReference type="Gene3D" id="1.25.40.20">
    <property type="entry name" value="Ankyrin repeat-containing domain"/>
    <property type="match status" value="1"/>
</dbReference>
<dbReference type="Gene3D" id="2.10.25.10">
    <property type="entry name" value="Laminin"/>
    <property type="match status" value="35"/>
</dbReference>
<dbReference type="IDEAL" id="IID50157"/>
<dbReference type="InterPro" id="IPR002110">
    <property type="entry name" value="Ankyrin_rpt"/>
</dbReference>
<dbReference type="InterPro" id="IPR036770">
    <property type="entry name" value="Ankyrin_rpt-contain_sf"/>
</dbReference>
<dbReference type="InterPro" id="IPR001881">
    <property type="entry name" value="EGF-like_Ca-bd_dom"/>
</dbReference>
<dbReference type="InterPro" id="IPR013032">
    <property type="entry name" value="EGF-like_CS"/>
</dbReference>
<dbReference type="InterPro" id="IPR000742">
    <property type="entry name" value="EGF-like_dom"/>
</dbReference>
<dbReference type="InterPro" id="IPR000152">
    <property type="entry name" value="EGF-type_Asp/Asn_hydroxyl_site"/>
</dbReference>
<dbReference type="InterPro" id="IPR018097">
    <property type="entry name" value="EGF_Ca-bd_CS"/>
</dbReference>
<dbReference type="InterPro" id="IPR009030">
    <property type="entry name" value="Growth_fac_rcpt_cys_sf"/>
</dbReference>
<dbReference type="InterPro" id="IPR008297">
    <property type="entry name" value="Notch"/>
</dbReference>
<dbReference type="InterPro" id="IPR035993">
    <property type="entry name" value="Notch-like_dom_sf"/>
</dbReference>
<dbReference type="InterPro" id="IPR049883">
    <property type="entry name" value="NOTCH1_EGF-like"/>
</dbReference>
<dbReference type="InterPro" id="IPR024600">
    <property type="entry name" value="Notch_C"/>
</dbReference>
<dbReference type="InterPro" id="IPR051022">
    <property type="entry name" value="Notch_Cell-Fate_Det"/>
</dbReference>
<dbReference type="InterPro" id="IPR000800">
    <property type="entry name" value="Notch_dom"/>
</dbReference>
<dbReference type="InterPro" id="IPR010660">
    <property type="entry name" value="Notch_NOD_dom"/>
</dbReference>
<dbReference type="InterPro" id="IPR011656">
    <property type="entry name" value="Notch_NODP_dom"/>
</dbReference>
<dbReference type="PANTHER" id="PTHR24049">
    <property type="entry name" value="CRUMBS FAMILY MEMBER"/>
    <property type="match status" value="1"/>
</dbReference>
<dbReference type="Pfam" id="PF00023">
    <property type="entry name" value="Ank"/>
    <property type="match status" value="1"/>
</dbReference>
<dbReference type="Pfam" id="PF12796">
    <property type="entry name" value="Ank_2"/>
    <property type="match status" value="2"/>
</dbReference>
<dbReference type="Pfam" id="PF00008">
    <property type="entry name" value="EGF"/>
    <property type="match status" value="17"/>
</dbReference>
<dbReference type="Pfam" id="PF07645">
    <property type="entry name" value="EGF_CA"/>
    <property type="match status" value="2"/>
</dbReference>
<dbReference type="Pfam" id="PF25024">
    <property type="entry name" value="EGF_TEN"/>
    <property type="match status" value="1"/>
</dbReference>
<dbReference type="Pfam" id="PF12661">
    <property type="entry name" value="hEGF"/>
    <property type="match status" value="4"/>
</dbReference>
<dbReference type="Pfam" id="PF06816">
    <property type="entry name" value="NOD"/>
    <property type="match status" value="1"/>
</dbReference>
<dbReference type="Pfam" id="PF07684">
    <property type="entry name" value="NODP"/>
    <property type="match status" value="1"/>
</dbReference>
<dbReference type="Pfam" id="PF00066">
    <property type="entry name" value="Notch"/>
    <property type="match status" value="3"/>
</dbReference>
<dbReference type="PIRSF" id="PIRSF002279">
    <property type="entry name" value="Notch"/>
    <property type="match status" value="1"/>
</dbReference>
<dbReference type="PRINTS" id="PR00010">
    <property type="entry name" value="EGFBLOOD"/>
</dbReference>
<dbReference type="PRINTS" id="PR01452">
    <property type="entry name" value="LNOTCHREPEAT"/>
</dbReference>
<dbReference type="PRINTS" id="PR01983">
    <property type="entry name" value="NOTCH"/>
</dbReference>
<dbReference type="SMART" id="SM00248">
    <property type="entry name" value="ANK"/>
    <property type="match status" value="7"/>
</dbReference>
<dbReference type="SMART" id="SM01334">
    <property type="entry name" value="DUF3454"/>
    <property type="match status" value="1"/>
</dbReference>
<dbReference type="SMART" id="SM00181">
    <property type="entry name" value="EGF"/>
    <property type="match status" value="36"/>
</dbReference>
<dbReference type="SMART" id="SM00179">
    <property type="entry name" value="EGF_CA"/>
    <property type="match status" value="33"/>
</dbReference>
<dbReference type="SMART" id="SM00004">
    <property type="entry name" value="NL"/>
    <property type="match status" value="3"/>
</dbReference>
<dbReference type="SMART" id="SM01338">
    <property type="entry name" value="NOD"/>
    <property type="match status" value="1"/>
</dbReference>
<dbReference type="SMART" id="SM01339">
    <property type="entry name" value="NODP"/>
    <property type="match status" value="1"/>
</dbReference>
<dbReference type="SUPFAM" id="SSF48403">
    <property type="entry name" value="Ankyrin repeat"/>
    <property type="match status" value="1"/>
</dbReference>
<dbReference type="SUPFAM" id="SSF57196">
    <property type="entry name" value="EGF/Laminin"/>
    <property type="match status" value="18"/>
</dbReference>
<dbReference type="SUPFAM" id="SSF57184">
    <property type="entry name" value="Growth factor receptor domain"/>
    <property type="match status" value="5"/>
</dbReference>
<dbReference type="SUPFAM" id="SSF90193">
    <property type="entry name" value="Notch domain"/>
    <property type="match status" value="3"/>
</dbReference>
<dbReference type="PROSITE" id="PS50297">
    <property type="entry name" value="ANK_REP_REGION"/>
    <property type="match status" value="1"/>
</dbReference>
<dbReference type="PROSITE" id="PS50088">
    <property type="entry name" value="ANK_REPEAT"/>
    <property type="match status" value="5"/>
</dbReference>
<dbReference type="PROSITE" id="PS00010">
    <property type="entry name" value="ASX_HYDROXYL"/>
    <property type="match status" value="22"/>
</dbReference>
<dbReference type="PROSITE" id="PS00022">
    <property type="entry name" value="EGF_1"/>
    <property type="match status" value="34"/>
</dbReference>
<dbReference type="PROSITE" id="PS01186">
    <property type="entry name" value="EGF_2"/>
    <property type="match status" value="28"/>
</dbReference>
<dbReference type="PROSITE" id="PS50026">
    <property type="entry name" value="EGF_3"/>
    <property type="match status" value="36"/>
</dbReference>
<dbReference type="PROSITE" id="PS01187">
    <property type="entry name" value="EGF_CA"/>
    <property type="match status" value="21"/>
</dbReference>
<dbReference type="PROSITE" id="PS50258">
    <property type="entry name" value="LNR"/>
    <property type="match status" value="3"/>
</dbReference>
<protein>
    <recommendedName>
        <fullName>Neurogenic locus Notch protein</fullName>
    </recommendedName>
    <component>
        <recommendedName>
            <fullName>Processed neurogenic locus Notch protein</fullName>
        </recommendedName>
    </component>
</protein>
<proteinExistence type="evidence at protein level"/>